<keyword id="KW-0002">3D-structure</keyword>
<keyword id="KW-0007">Acetylation</keyword>
<keyword id="KW-0025">Alternative splicing</keyword>
<keyword id="KW-0051">Antiviral defense</keyword>
<keyword id="KW-0067">ATP-binding</keyword>
<keyword id="KW-0965">Cell junction</keyword>
<keyword id="KW-1003">Cell membrane</keyword>
<keyword id="KW-0966">Cell projection</keyword>
<keyword id="KW-0963">Cytoplasm</keyword>
<keyword id="KW-0206">Cytoskeleton</keyword>
<keyword id="KW-0225">Disease variant</keyword>
<keyword id="KW-0347">Helicase</keyword>
<keyword id="KW-0945">Host-virus interaction</keyword>
<keyword id="KW-0378">Hydrolase</keyword>
<keyword id="KW-0391">Immunity</keyword>
<keyword id="KW-0399">Innate immunity</keyword>
<keyword id="KW-1017">Isopeptide bond</keyword>
<keyword id="KW-0472">Membrane</keyword>
<keyword id="KW-0479">Metal-binding</keyword>
<keyword id="KW-0547">Nucleotide-binding</keyword>
<keyword id="KW-0597">Phosphoprotein</keyword>
<keyword id="KW-1267">Proteomics identification</keyword>
<keyword id="KW-1185">Reference proteome</keyword>
<keyword id="KW-0677">Repeat</keyword>
<keyword id="KW-0694">RNA-binding</keyword>
<keyword id="KW-0796">Tight junction</keyword>
<keyword id="KW-0832">Ubl conjugation</keyword>
<keyword id="KW-0862">Zinc</keyword>
<evidence type="ECO:0000250" key="1">
    <source>
        <dbReference type="UniProtKB" id="Q6Q899"/>
    </source>
</evidence>
<evidence type="ECO:0000255" key="2">
    <source>
        <dbReference type="PROSITE-ProRule" id="PRU00541"/>
    </source>
</evidence>
<evidence type="ECO:0000255" key="3">
    <source>
        <dbReference type="PROSITE-ProRule" id="PRU00542"/>
    </source>
</evidence>
<evidence type="ECO:0000255" key="4">
    <source>
        <dbReference type="PROSITE-ProRule" id="PRU01125"/>
    </source>
</evidence>
<evidence type="ECO:0000269" key="5">
    <source>
    </source>
</evidence>
<evidence type="ECO:0000269" key="6">
    <source>
    </source>
</evidence>
<evidence type="ECO:0000269" key="7">
    <source>
    </source>
</evidence>
<evidence type="ECO:0000269" key="8">
    <source>
    </source>
</evidence>
<evidence type="ECO:0000269" key="9">
    <source>
    </source>
</evidence>
<evidence type="ECO:0000269" key="10">
    <source>
    </source>
</evidence>
<evidence type="ECO:0000269" key="11">
    <source>
    </source>
</evidence>
<evidence type="ECO:0000269" key="12">
    <source>
    </source>
</evidence>
<evidence type="ECO:0000269" key="13">
    <source>
    </source>
</evidence>
<evidence type="ECO:0000269" key="14">
    <source>
    </source>
</evidence>
<evidence type="ECO:0000269" key="15">
    <source>
    </source>
</evidence>
<evidence type="ECO:0000269" key="16">
    <source>
    </source>
</evidence>
<evidence type="ECO:0000269" key="17">
    <source>
    </source>
</evidence>
<evidence type="ECO:0000269" key="18">
    <source>
    </source>
</evidence>
<evidence type="ECO:0000269" key="19">
    <source>
    </source>
</evidence>
<evidence type="ECO:0000269" key="20">
    <source>
    </source>
</evidence>
<evidence type="ECO:0000269" key="21">
    <source>
    </source>
</evidence>
<evidence type="ECO:0000269" key="22">
    <source>
    </source>
</evidence>
<evidence type="ECO:0000269" key="23">
    <source>
    </source>
</evidence>
<evidence type="ECO:0000269" key="24">
    <source>
    </source>
</evidence>
<evidence type="ECO:0000269" key="25">
    <source>
    </source>
</evidence>
<evidence type="ECO:0000269" key="26">
    <source>
    </source>
</evidence>
<evidence type="ECO:0000269" key="27">
    <source>
    </source>
</evidence>
<evidence type="ECO:0000269" key="28">
    <source>
    </source>
</evidence>
<evidence type="ECO:0000269" key="29">
    <source>
    </source>
</evidence>
<evidence type="ECO:0000269" key="30">
    <source>
    </source>
</evidence>
<evidence type="ECO:0000269" key="31">
    <source>
    </source>
</evidence>
<evidence type="ECO:0000269" key="32">
    <source>
    </source>
</evidence>
<evidence type="ECO:0000269" key="33">
    <source>
    </source>
</evidence>
<evidence type="ECO:0000269" key="34">
    <source>
    </source>
</evidence>
<evidence type="ECO:0000269" key="35">
    <source>
    </source>
</evidence>
<evidence type="ECO:0000269" key="36">
    <source>
    </source>
</evidence>
<evidence type="ECO:0000269" key="37">
    <source>
    </source>
</evidence>
<evidence type="ECO:0000269" key="38">
    <source>
    </source>
</evidence>
<evidence type="ECO:0000269" key="39">
    <source>
    </source>
</evidence>
<evidence type="ECO:0000269" key="40">
    <source>
    </source>
</evidence>
<evidence type="ECO:0000269" key="41">
    <source>
    </source>
</evidence>
<evidence type="ECO:0000269" key="42">
    <source>
    </source>
</evidence>
<evidence type="ECO:0000269" key="43">
    <source>
    </source>
</evidence>
<evidence type="ECO:0000269" key="44">
    <source>
    </source>
</evidence>
<evidence type="ECO:0000269" key="45">
    <source>
    </source>
</evidence>
<evidence type="ECO:0000269" key="46">
    <source>
    </source>
</evidence>
<evidence type="ECO:0000269" key="47">
    <source>
    </source>
</evidence>
<evidence type="ECO:0000269" key="48">
    <source>
    </source>
</evidence>
<evidence type="ECO:0000269" key="49">
    <source>
    </source>
</evidence>
<evidence type="ECO:0000269" key="50">
    <source>
    </source>
</evidence>
<evidence type="ECO:0000269" key="51">
    <source>
    </source>
</evidence>
<evidence type="ECO:0000269" key="52">
    <source>
    </source>
</evidence>
<evidence type="ECO:0000269" key="53">
    <source>
    </source>
</evidence>
<evidence type="ECO:0000269" key="54">
    <source>
    </source>
</evidence>
<evidence type="ECO:0000269" key="55">
    <source>
    </source>
</evidence>
<evidence type="ECO:0000269" key="56">
    <source>
    </source>
</evidence>
<evidence type="ECO:0000269" key="57">
    <source>
    </source>
</evidence>
<evidence type="ECO:0000269" key="58">
    <source>
    </source>
</evidence>
<evidence type="ECO:0000269" key="59">
    <source>
    </source>
</evidence>
<evidence type="ECO:0000269" key="60">
    <source>
    </source>
</evidence>
<evidence type="ECO:0000269" key="61">
    <source>
    </source>
</evidence>
<evidence type="ECO:0000269" key="62">
    <source>
    </source>
</evidence>
<evidence type="ECO:0000269" key="63">
    <source>
    </source>
</evidence>
<evidence type="ECO:0000269" key="64">
    <source>
    </source>
</evidence>
<evidence type="ECO:0000269" key="65">
    <source>
    </source>
</evidence>
<evidence type="ECO:0000269" key="66">
    <source>
    </source>
</evidence>
<evidence type="ECO:0000269" key="67">
    <source>
    </source>
</evidence>
<evidence type="ECO:0000269" key="68">
    <source>
    </source>
</evidence>
<evidence type="ECO:0000269" key="69">
    <source>
    </source>
</evidence>
<evidence type="ECO:0000269" key="70">
    <source>
    </source>
</evidence>
<evidence type="ECO:0000269" key="71">
    <source>
    </source>
</evidence>
<evidence type="ECO:0000269" key="72">
    <source>
    </source>
</evidence>
<evidence type="ECO:0000269" key="73">
    <source>
    </source>
</evidence>
<evidence type="ECO:0000269" key="74">
    <source ref="1"/>
</evidence>
<evidence type="ECO:0000269" key="75">
    <source ref="74"/>
</evidence>
<evidence type="ECO:0000303" key="76">
    <source>
    </source>
</evidence>
<evidence type="ECO:0000303" key="77">
    <source>
    </source>
</evidence>
<evidence type="ECO:0000303" key="78">
    <source>
    </source>
</evidence>
<evidence type="ECO:0000305" key="79"/>
<evidence type="ECO:0000305" key="80">
    <source>
    </source>
</evidence>
<evidence type="ECO:0000305" key="81">
    <source>
    </source>
</evidence>
<evidence type="ECO:0000312" key="82">
    <source>
        <dbReference type="HGNC" id="HGNC:19102"/>
    </source>
</evidence>
<evidence type="ECO:0007744" key="83">
    <source>
    </source>
</evidence>
<evidence type="ECO:0007829" key="84">
    <source>
        <dbReference type="PDB" id="2RMJ"/>
    </source>
</evidence>
<evidence type="ECO:0007829" key="85">
    <source>
        <dbReference type="PDB" id="2YKG"/>
    </source>
</evidence>
<evidence type="ECO:0007829" key="86">
    <source>
        <dbReference type="PDB" id="3ZD7"/>
    </source>
</evidence>
<evidence type="ECO:0007829" key="87">
    <source>
        <dbReference type="PDB" id="4BPB"/>
    </source>
</evidence>
<evidence type="ECO:0007829" key="88">
    <source>
        <dbReference type="PDB" id="4ON9"/>
    </source>
</evidence>
<evidence type="ECO:0007829" key="89">
    <source>
        <dbReference type="PDB" id="4P4H"/>
    </source>
</evidence>
<evidence type="ECO:0007829" key="90">
    <source>
        <dbReference type="PDB" id="5F9F"/>
    </source>
</evidence>
<evidence type="ECO:0007829" key="91">
    <source>
        <dbReference type="PDB" id="6GPG"/>
    </source>
</evidence>
<evidence type="ECO:0007829" key="92">
    <source>
        <dbReference type="PDB" id="7BAH"/>
    </source>
</evidence>
<evidence type="ECO:0007829" key="93">
    <source>
        <dbReference type="PDB" id="7MK1"/>
    </source>
</evidence>
<evidence type="ECO:0007829" key="94">
    <source>
        <dbReference type="PDB" id="7TO0"/>
    </source>
</evidence>
<evidence type="ECO:0007829" key="95">
    <source>
        <dbReference type="PDB" id="8DVS"/>
    </source>
</evidence>
<evidence type="ECO:0007829" key="96">
    <source>
        <dbReference type="PDB" id="8DVU"/>
    </source>
</evidence>
<gene>
    <name evidence="82" type="primary">RIGI</name>
    <name type="synonym">DDX58</name>
</gene>
<accession>O95786</accession>
<accession>A2RU81</accession>
<accession>Q5HYE1</accession>
<accession>Q5VYT1</accession>
<accession>Q9NT04</accession>
<comment type="function">
    <text evidence="7 9 11 12 13 15 21 24 26 29 30 31 39 49 61 62 66 71 72 73 75 77 78">Innate immune receptor that senses cytoplasmic viral nucleic acids and activates a downstream signaling cascade leading to the production of type I interferons and pro-inflammatory cytokines (PubMed:15208624, PubMed:15708988, PubMed:16125763, PubMed:16127453, PubMed:16153868, PubMed:17190814, PubMed:18636086, PubMed:19122199, PubMed:19211564, PubMed:24366338, PubMed:28469175, PubMed:29117565, PubMed:31006531, PubMed:34935440, PubMed:35263596, PubMed:36793726). Forms a ribonucleoprotein complex with viral RNAs on which it homooligomerizes to form filaments (PubMed:15208624, PubMed:15708988). The homooligomerization allows the recruitment of RNF135 an E3 ubiquitin-protein ligase that activates and amplifies the RIG-I-mediated antiviral signaling in an RNA length-dependent manner through ubiquitination-dependent and -independent mechanisms (PubMed:28469175, PubMed:31006531). Upon activation, associates with mitochondria antiviral signaling protein (MAVS/IPS1) that activates the IKK-related kinases TBK1 and IKBKE which in turn phosphorylate the interferon regulatory factors IRF3 and IRF7, activating transcription of antiviral immunological genes including the IFN-alpha and IFN-beta interferons (PubMed:28469175, PubMed:31006531). Ligands include 5'-triphosphorylated ssRNAs and dsRNAs but also short dsRNAs (&lt;1 kb in length) (PubMed:15208624, PubMed:15708988, PubMed:19576794, PubMed:19609254, PubMed:21742966). In addition to the 5'-triphosphate moiety, blunt-end base pairing at the 5'-end of the RNA is very essential (PubMed:15208624, PubMed:15708988, PubMed:19576794, PubMed:19609254, PubMed:21742966). Overhangs at the non-triphosphorylated end of the dsRNA RNA have no major impact on its activity (PubMed:15208624, PubMed:15708988, PubMed:19576794, PubMed:19609254, PubMed:21742966). A 3'overhang at the 5'triphosphate end decreases and any 5'overhang at the 5' triphosphate end abolishes its activity (PubMed:15208624, PubMed:15708988, PubMed:19576794, PubMed:19609254, PubMed:21742966). Detects both positive and negative strand RNA viruses including members of the families Paramyxoviridae: Human respiratory syncytial virus and measles virus (MeV), Rhabdoviridae: vesicular stomatitis virus (VSV), Orthomyxoviridae: influenza A and B virus, Flaviviridae: Japanese encephalitis virus (JEV), hepatitis C virus (HCV), dengue virus (DENV) and west Nile virus (WNV) (PubMed:21616437, PubMed:21884169). It also detects rotaviruses and reoviruses (PubMed:21616437, PubMed:21884169). Detects and binds to SARS-CoV-2 RNAs which is inhibited by m6A RNA modifications (Ref.74). Also involved in antiviral signaling in response to viruses containing a dsDNA genome such as Epstein-Barr virus (EBV) (PubMed:19631370). Detects dsRNA produced from non-self dsDNA by RNA polymerase III, such as Epstein-Barr virus-encoded RNAs (EBERs). May play important roles in granulocyte production and differentiation, bacterial phagocytosis and in the regulation of cell migration.</text>
</comment>
<comment type="catalytic activity">
    <reaction evidence="26">
        <text>ATP + H2O = ADP + phosphate + H(+)</text>
        <dbReference type="Rhea" id="RHEA:13065"/>
        <dbReference type="ChEBI" id="CHEBI:15377"/>
        <dbReference type="ChEBI" id="CHEBI:15378"/>
        <dbReference type="ChEBI" id="CHEBI:30616"/>
        <dbReference type="ChEBI" id="CHEBI:43474"/>
        <dbReference type="ChEBI" id="CHEBI:456216"/>
        <dbReference type="EC" id="3.6.4.13"/>
    </reaction>
    <physiologicalReaction direction="left-to-right" evidence="80">
        <dbReference type="Rhea" id="RHEA:13066"/>
    </physiologicalReaction>
</comment>
<comment type="subunit">
    <text evidence="1 11 12 13 14 15 16 20 21 22 23 27 28 33 35 37 38 40 41 44 47 48 53 54 56 58 59 61 63 65 66 67 69 70 72 73">Monomer; maintained as a monomer in an autoinhibited state. Upon binding of viral RNAs and conformational shift, homooligomerizes and forms filaments on these molecules (PubMed:26471729, PubMed:31881323). Interacts (via tandem CARD domain) with MAVS/IPS1 promoting its filamentation. Interacts with DHX58/LGP2, IKBKE, TBK1 and STING1. Interacts (via CARD domain) with TRIM25 (via SPRY domain). Interacts (double-stranded RNA-bound oligomeric form) with RNF135 (homodimer); involved in RNA length-dependent activation of the RIG-I signaling pathway (PubMed:19017631, PubMed:19484123, PubMed:23950712, PubMed:28469175, PubMed:31006531). Interacts with CYLD. Interacts with NLRC5; blocks the interaction of MAVS/IPS1 to RIGI. Interacts with SRC. Interacts with DDX60. Interacts with isoform 2 of ZC3HAV1 (via zinc-fingers) in an RNA-dependent manner. Interacts (via tandem CARD domain) with SEC14L1; the interaction is direct and impairs the interaction of RIGI with MAVS/IPS1. Interacts with VCP/p97; interaction is direct and allows the recruitment of RNF125 and subsequent ubiquitination and degradation (PubMed:26471729). Interacts with NOP53; may regulate RIGI through USP15-mediated 'Lys-63'-linked deubiquitination (PubMed:27824081). Interacts with SIGLEC10, CBL and PTPN11; within a negative feedback loop leading to RIGI degradation (By similarity). Interacts with LRRC25 (PubMed:29288164). Interacts with ZCCHC3; leading to activation of RIGI (PubMed:30193849). Interacts with RNF123 (PubMed:27312109). Interacts with UBE2D3 and UBE2N; E2 ubiquitin ligases involved in RNF135-mediated ubiquitination of RIGI and activation of the RIG-I signaling pathway (PubMed:28469175). Interacts with IFIT3 (PubMed:21813773). Interacts with DDX3X (PubMed:20127681). Interacts with RTN3 (PubMed:34313226). Interacts with ARL16; this interaction is GTP-dependent and induced upon viral infection; this interaction suppresses the RNA sensing activity of RIGI (PubMed:21233210). Interacts with DHX16; this interaction enhances RIGI-mediated antiviral response (PubMed:35263596). Interacts with IRGM; promoting RIGI degradation (PubMed:32715615). Interacts with IFI6; this interaction inhibits RIGI activation (PubMed:36793726). Interacts with ECSIT; this interaction bridges RIGI to the MAVS complex at the mitochondrion (PubMed:25228397). Interacts with YWHAE; this interaction drives RIGI at the mitochondrion (PubMed:22607805).</text>
</comment>
<comment type="subunit">
    <text evidence="32">(Microbial infection) Interacts with protein Z of Guanarito virus, Machupo virus, Junin arenavirus and Sabia virus. This interaction disrupts its interaction with MAVS/IPS1, impeding downstream IRF3 and NF-kappa-B activation and resulting in decreased IFN-beta induction (PubMed:20007272).</text>
</comment>
<comment type="subunit">
    <text evidence="25">(Microbial infection) Interacts (via CARD domain) with Human respiratory syncytial virus A non-structural protein 2 (NS2) and this interaction disrupts its interaction with MAVS/IPS1, impeding downstream IRF3 activation (PubMed:19193793).</text>
</comment>
<comment type="subunit">
    <text evidence="42">(Microbial infection) Interacts with Rotavirus A non-structural protein 1 (NSP1) and this interaction induces down-regulation of RIGI (PubMed:22152002).</text>
</comment>
<comment type="subunit">
    <text evidence="64">(Microbial infection) Interacts with paramyxoviruses (Sendai virus, Nipah virus, Measles virus and Parainfluenza virus 5) protein V; this interaction inhibits TRIM25-mediated ubiquitination of RIG-I and prevents downstream RIG-I signaling thereby inhibiting the IFN responses.</text>
</comment>
<comment type="subunit">
    <text evidence="43">(Microbial infection) Interacts with herpes simplex virus 1 protein US11; this interaction prevents the interaction of MAVS/IPS1 to RIGI (PubMed:22301138).</text>
</comment>
<comment type="subunit">
    <text evidence="60">(Microbial infection) Interacts with herpes simplex virus 1 protein UL37; this interaction deaminates RIGI and inhibits its activation.</text>
</comment>
<comment type="subunit">
    <text evidence="51">(Microbial infection) Interacts with Severe fever with thrombocytopenia virus (SFTSV) NSs; this interaction this interaction sequesters RIGI in NSs-induced cytoplasmic inclusion bodies thereby inhibiting the IFN responses.</text>
</comment>
<comment type="interaction">
    <interactant intactId="EBI-995350">
        <id>O95786</id>
    </interactant>
    <interactant intactId="EBI-2117940">
        <id>Q9NQC7</id>
        <label>CYLD</label>
    </interactant>
    <organismsDiffer>false</organismsDiffer>
    <experiments>2</experiments>
</comment>
<comment type="interaction">
    <interactant intactId="EBI-995350">
        <id>O95786</id>
    </interactant>
    <interactant intactId="EBI-353779">
        <id>O00571</id>
        <label>DDX3X</label>
    </interactant>
    <organismsDiffer>false</organismsDiffer>
    <experiments>2</experiments>
</comment>
<comment type="interaction">
    <interactant intactId="EBI-995350">
        <id>O95786</id>
    </interactant>
    <interactant intactId="EBI-995373">
        <id>Q7Z434</id>
        <label>MAVS</label>
    </interactant>
    <organismsDiffer>false</organismsDiffer>
    <experiments>19</experiments>
</comment>
<comment type="interaction">
    <interactant intactId="EBI-995350">
        <id>O95786</id>
    </interactant>
    <interactant intactId="EBI-720156">
        <id>Q9NZM5</id>
        <label>NOP53</label>
    </interactant>
    <organismsDiffer>false</organismsDiffer>
    <experiments>2</experiments>
</comment>
<comment type="interaction">
    <interactant intactId="EBI-995350">
        <id>O95786</id>
    </interactant>
    <interactant intactId="EBI-1994109">
        <id>Q8TAT6</id>
        <label>NPLOC4</label>
    </interactant>
    <organismsDiffer>false</organismsDiffer>
    <experiments>6</experiments>
</comment>
<comment type="interaction">
    <interactant intactId="EBI-995350">
        <id>O95786</id>
    </interactant>
    <interactant intactId="EBI-713955">
        <id>O75569</id>
        <label>PRKRA</label>
    </interactant>
    <organismsDiffer>false</organismsDiffer>
    <experiments>5</experiments>
</comment>
<comment type="interaction">
    <interactant intactId="EBI-995350">
        <id>O95786</id>
    </interactant>
    <interactant intactId="EBI-995350">
        <id>O95786</id>
        <label>RIGI</label>
    </interactant>
    <organismsDiffer>false</organismsDiffer>
    <experiments>3</experiments>
</comment>
<comment type="interaction">
    <interactant intactId="EBI-995350">
        <id>O95786</id>
    </interactant>
    <interactant intactId="EBI-2339208">
        <id>Q96EQ8</id>
        <label>RNF125</label>
    </interactant>
    <organismsDiffer>false</organismsDiffer>
    <experiments>4</experiments>
</comment>
<comment type="interaction">
    <interactant intactId="EBI-995350">
        <id>O95786</id>
    </interactant>
    <interactant intactId="EBI-1057697">
        <id>P42224</id>
        <label>STAT1</label>
    </interactant>
    <organismsDiffer>false</organismsDiffer>
    <experiments>4</experiments>
</comment>
<comment type="interaction">
    <interactant intactId="EBI-995350">
        <id>O95786</id>
    </interactant>
    <interactant intactId="EBI-2341129">
        <id>Q14258</id>
        <label>TRIM25</label>
    </interactant>
    <organismsDiffer>false</organismsDiffer>
    <experiments>9</experiments>
</comment>
<comment type="interaction">
    <interactant intactId="EBI-995350">
        <id>O95786</id>
    </interactant>
    <interactant intactId="EBI-2513471">
        <id>Q96S55</id>
        <label>WRNIP1</label>
    </interactant>
    <organismsDiffer>false</organismsDiffer>
    <experiments>2</experiments>
</comment>
<comment type="interaction">
    <interactant intactId="EBI-995350">
        <id>O95786</id>
    </interactant>
    <interactant intactId="EBI-922540">
        <id>Q7Z2W4</id>
        <label>ZC3HAV1</label>
    </interactant>
    <organismsDiffer>false</organismsDiffer>
    <experiments>3</experiments>
</comment>
<comment type="interaction">
    <interactant intactId="EBI-995350">
        <id>O95786</id>
    </interactant>
    <interactant intactId="EBI-922559">
        <id>Q7Z2W4-2</id>
        <label>ZC3HAV1</label>
    </interactant>
    <organismsDiffer>false</organismsDiffer>
    <experiments>4</experiments>
</comment>
<comment type="interaction">
    <interactant intactId="EBI-995350">
        <id>O95786</id>
    </interactant>
    <interactant intactId="EBI-3648048">
        <id>P04543</id>
        <label>1B</label>
    </interactant>
    <organismsDiffer>true</organismsDiffer>
    <experiments>2</experiments>
</comment>
<comment type="interaction">
    <interactant intactId="EBI-995350">
        <id>O95786</id>
    </interactant>
    <interactant intactId="EBI-1374296">
        <id>Q920D5</id>
        <label>Casp12</label>
    </interactant>
    <organismsDiffer>true</organismsDiffer>
    <experiments>4</experiments>
</comment>
<comment type="interaction">
    <interactant intactId="EBI-995350">
        <id>O95786</id>
    </interactant>
    <interactant intactId="EBI-25487824">
        <id>P59596</id>
        <label>M</label>
    </interactant>
    <organismsDiffer>true</organismsDiffer>
    <experiments>4</experiments>
</comment>
<comment type="interaction">
    <interactant intactId="EBI-995350">
        <id>O95786</id>
    </interactant>
    <interactant intactId="EBI-25475856">
        <id>P0DTC9</id>
        <label>N</label>
    </interactant>
    <organismsDiffer>true</organismsDiffer>
    <experiments>15</experiments>
</comment>
<comment type="interaction">
    <interactant intactId="EBI-995350">
        <id>O95786</id>
    </interactant>
    <interactant intactId="EBI-9687469">
        <id>A0A0B5AC19</id>
        <label>NSS</label>
    </interactant>
    <organismsDiffer>true</organismsDiffer>
    <experiments>5</experiments>
</comment>
<comment type="interaction">
    <interactant intactId="EBI-995350">
        <id>O95786</id>
    </interactant>
    <interactant intactId="EBI-6693910">
        <id>P21699</id>
        <label>NSS</label>
    </interactant>
    <organismsDiffer>true</organismsDiffer>
    <experiments>3</experiments>
</comment>
<comment type="interaction">
    <interactant intactId="EBI-995350">
        <id>O95786</id>
    </interactant>
    <interactant intactId="EBI-25475864">
        <id>PRO_0000449623</id>
        <label>rep</label>
        <dbReference type="UniProtKB" id="P0DTD1"/>
    </interactant>
    <organismsDiffer>true</organismsDiffer>
    <experiments>6</experiments>
</comment>
<comment type="interaction">
    <interactant intactId="EBI-995350">
        <id>O95786</id>
    </interactant>
    <interactant intactId="EBI-6150681">
        <id>P04487</id>
        <label>US11</label>
    </interactant>
    <organismsDiffer>true</organismsDiffer>
    <experiments>4</experiments>
</comment>
<comment type="interaction">
    <interactant intactId="EBI-995350">
        <id>O95786</id>
    </interactant>
    <interactant intactId="EBI-3647473">
        <id>Q6IUF9</id>
        <label>Z</label>
    </interactant>
    <organismsDiffer>true</organismsDiffer>
    <experiments>3</experiments>
</comment>
<comment type="interaction">
    <interactant intactId="EBI-995350">
        <id>O95786</id>
    </interactant>
    <interactant intactId="EBI-3647294">
        <id>Q6IVU5</id>
        <label>Z</label>
    </interactant>
    <organismsDiffer>true</organismsDiffer>
    <experiments>3</experiments>
</comment>
<comment type="interaction">
    <interactant intactId="EBI-995350">
        <id>O95786</id>
    </interactant>
    <interactant intactId="EBI-3647496">
        <id>Q6UY62</id>
        <label>Z</label>
    </interactant>
    <organismsDiffer>true</organismsDiffer>
    <experiments>2</experiments>
</comment>
<comment type="interaction">
    <interactant intactId="EBI-995350">
        <id>O95786</id>
    </interactant>
    <interactant intactId="EBI-3647448">
        <id>Q6UY71</id>
        <label>Z</label>
    </interactant>
    <organismsDiffer>true</organismsDiffer>
    <experiments>3</experiments>
</comment>
<comment type="interaction">
    <interactant intactId="EBI-15577823">
        <id>O95786-1</id>
    </interactant>
    <interactant intactId="EBI-1047414">
        <id>Q9H1Y0</id>
        <label>ATG5</label>
    </interactant>
    <organismsDiffer>false</organismsDiffer>
    <experiments>4</experiments>
</comment>
<comment type="interaction">
    <interactant intactId="EBI-15577823">
        <id>O95786-1</id>
    </interactant>
    <interactant intactId="EBI-15577799">
        <id>Q7Z434-1</id>
        <label>MAVS</label>
    </interactant>
    <organismsDiffer>false</organismsDiffer>
    <experiments>8</experiments>
</comment>
<comment type="interaction">
    <interactant intactId="EBI-15577823">
        <id>O95786-1</id>
    </interactant>
    <interactant intactId="EBI-15577823">
        <id>O95786-1</id>
        <label>RIGI</label>
    </interactant>
    <organismsDiffer>false</organismsDiffer>
    <experiments>4</experiments>
</comment>
<comment type="interaction">
    <interactant intactId="EBI-15577823">
        <id>O95786-1</id>
    </interactant>
    <interactant intactId="EBI-2339208">
        <id>Q96EQ8</id>
        <label>RNF125</label>
    </interactant>
    <organismsDiffer>false</organismsDiffer>
    <experiments>5</experiments>
</comment>
<comment type="interaction">
    <interactant intactId="EBI-15577823">
        <id>O95786-1</id>
    </interactant>
    <interactant intactId="EBI-2800345">
        <id>Q86WV6</id>
        <label>STING1</label>
    </interactant>
    <organismsDiffer>false</organismsDiffer>
    <experiments>2</experiments>
</comment>
<comment type="interaction">
    <interactant intactId="EBI-15577823">
        <id>O95786-1</id>
    </interactant>
    <interactant intactId="EBI-6150155">
        <id>Q99AU3</id>
        <label>NS</label>
    </interactant>
    <organismsDiffer>true</organismsDiffer>
    <experiments>2</experiments>
</comment>
<comment type="subcellular location">
    <subcellularLocation>
        <location>Cytoplasm</location>
    </subcellularLocation>
    <subcellularLocation>
        <location>Cell projection</location>
        <location>Ruffle membrane</location>
    </subcellularLocation>
    <subcellularLocation>
        <location>Cytoplasm</location>
        <location>Cytoskeleton</location>
    </subcellularLocation>
    <subcellularLocation>
        <location>Cell junction</location>
        <location>Tight junction</location>
    </subcellularLocation>
    <text>Colocalized with TRIM25 at cytoplasmic perinuclear bodies. Associated with the actin cytoskeleton at membrane ruffles.</text>
</comment>
<comment type="alternative products">
    <event type="alternative splicing"/>
    <isoform>
        <id>O95786-1</id>
        <name>1</name>
        <sequence type="displayed"/>
    </isoform>
    <isoform>
        <id>O95786-2</id>
        <name>2</name>
        <sequence type="described" ref="VSP_016054"/>
    </isoform>
</comment>
<comment type="tissue specificity">
    <text evidence="8">Present in vascular smooth cells (at protein level).</text>
</comment>
<comment type="induction">
    <text evidence="5 6 7 8 9">By bacterial lipopolysaccharides (LPS) in endothelial cells. By interferon (IFN).</text>
</comment>
<comment type="domain">
    <text evidence="48">The RLR CTR domain controls homooligomerization and interaction with MAVS/IPS1. In the absence of viral infection, the protein is maintained as a monomer in an autoinhibited state with the CARD domains masked through intramolecular interactions with the RLR CTR domain. Upon binding to viral RNA and ubiquitination by RNF135, a conformational change releases the autoinhibition promoting further homooligomerization, interaction of the CARD domains with the adapter protein MAVS/IPS1 and activation of the downstream RIG-I signaling pathway.</text>
</comment>
<comment type="domain">
    <text>The helicase domain is responsible for dsRNA recognition.</text>
</comment>
<comment type="domain">
    <text>The 2 CARD domains are responsible for interaction with and signaling through MAVS/IPS1 and for association with the actin cytoskeleton.</text>
</comment>
<comment type="domain">
    <text evidence="16">The second CARD domain is the primary site for 'Lys-63'-linked ubiquitination.</text>
</comment>
<comment type="PTM">
    <text evidence="36">Phosphorylated in resting cells and dephosphorylated in RNA virus-infected cells. Phosphorylation at Thr-770, Ser-854 and Ser-855 results in inhibition of its activity while dephosphorylation at these sites results in its activation.</text>
</comment>
<comment type="PTM">
    <text evidence="1 16 17 21 23 28 34 48 49 52 56 62 65 66 68">Ubiquitinated. 'Lys-63' ubiquitination by RNF135, which occurs after RNA-binding and homodimerization, releases the autoinhibition of the CARD domains by the RLR CTR domain, an essential step in the activation of the RIG-I signaling pathway (PubMed:23950712, PubMed:28469175, PubMed:31006531). Lys-172 is the critical site of ubiquitination for MAVS/IPS1 binding and to induce anti-viral signal transduction (PubMed:17392790, PubMed:30193849). Lys-154, Lys-164 and Lys-172 are shared sites for RNF135-mediated and TRIM4-mediated ubiquitination (PubMed:19017631, PubMed:19484123, PubMed:24755855). Also undergoes 'Lys-48' ubiquitination at Lys-181 by RNF125 that leads to proteasomal degradation (PubMed:17460044, PubMed:26471729). 'Lys-48' ubiquitination follows viral infection and is enhanced by 'Lys-63'-linked ubiquitination of the CARD domains that promotes interaction with VCP/p97 and subsequent recruitment of RNF125 (PubMed:17460044, PubMed:26471729). Within a negative feedback loop involving SIGLEC10 and PTPN11, 'Lys-48' ubiquitination at Lys-812 by CBL also elicits the proteasomal degradation of RIGI (By similarity). Deubiquitinated by CYLD, a protease that selectively cleaves 'Lys-63'-linked ubiquitin chains (PubMed:18636086). Also probably deubiquitinated by USP17L2/USP17 that cleaves 'Lys-48'- and 'Lys-63'-linked ubiquitin chains and positively regulates the receptor (PubMed:20368735). Ubiquitinated by TRIM40 via 'Lys-48'-linked ubiquitination; leading to proteasomal degradation (PubMed:29117565). Deubiquitinated by USP27X that cleaves 'Lys-63'-linked ubiquitin chains and inhibits the innate immune receptor activity (PubMed:32027733). Deubiquitinated by USP3 that also cleaves 'Lys-63'-linked ubiquitin chains and inhibits the innate immune receptor activity (PubMed:24366338). Undergoes 'Lys-48'-linked ubiquitination catalyzed by MARCHF5 at Lys-193 and Lys-203, leading to proteasomal degradation (PubMed:31881323).</text>
</comment>
<comment type="PTM">
    <text evidence="46">Phosphorylated at Ser-8 and Thr-170; these phosphorylations suppresse the TRIM25-mediated 'Lys-63'-linked ubiquitination of RIG-I and thereby prevents RIG-I downstream signaling. Dephosphorylated by phosphatases PPP1CA/PPP1CC; this step is essential to activate RIGI and initiate downstream signaling.</text>
</comment>
<comment type="PTM">
    <text evidence="10 19 34">ISGylated. Conjugated to ubiquitin-like protein ISG15 upon IFN-beta stimulation. ISGylation negatively regulates its function in antiviral signaling response.</text>
</comment>
<comment type="PTM">
    <text evidence="34 45">Sumoylated, probably by MUL1; inhibiting its polyubiquitination.</text>
</comment>
<comment type="PTM">
    <text evidence="57">Acetylated in response to RNA virus infection (PubMed:26746851). Deacetylated by HDAC6 in the presence of viral mRNAs which is required for detection of viral RNA by RIGI (PubMed:26746851).</text>
</comment>
<comment type="PTM">
    <text evidence="60">(Microbial infection) Deamidated on Asn-495 and Asn-549 by herpes simplex virus 1 protein UL37. These modifications eliminate RIGI detection of viral RNA and restriction of viral replication.</text>
</comment>
<comment type="PTM">
    <text evidence="69">Degraded via selective autophagy following interaction with IRGM (PubMed:32715615). IRGM promotes RIGI recruitment to autophagosome membranes, promoting its SQSTM1/p62-dependent autophagic degradation (PubMed:32715615).</text>
</comment>
<comment type="PTM">
    <text evidence="50">(Microbial infection) Cleaved by the protease 3C of coxsackievirus B3, poliovirus and enterovirus 71 allowing the virus to disrupt the host type I interferon production.</text>
</comment>
<comment type="PTM">
    <text evidence="71">(Microbial infection) Phosphorylated at Ser-8 by herpes simplex virus 1 protein US3 leading to inhibition of critical RIGI activation steps.</text>
</comment>
<comment type="disease" evidence="55">
    <disease id="DI-04387">
        <name>Singleton-Merten syndrome 2</name>
        <acronym>SGMRT2</acronym>
        <description>A form of Singleton-Merten syndrome, an autosomal dominant disorder characterized by marked aortic calcification, dental anomalies, osteopenia, acro-osteolysis, and to a lesser extent glaucoma, psoriasis, muscle weakness, and joint laxity. Additional clinical manifestations include particular facial characteristics and abnormal joint and muscle ligaments. SGMRT2 is an atypical form characterized by variable expression of glaucoma, aortic calcification, and skeletal abnormalities, without dental anomalies.</description>
        <dbReference type="MIM" id="616298"/>
    </disease>
    <text>The disease is caused by variants affecting the gene represented in this entry.</text>
</comment>
<comment type="similarity">
    <text evidence="79">Belongs to the helicase family. RLR subfamily.</text>
</comment>
<reference key="1">
    <citation type="thesis" date="1997" institute="Shanghai Institute of Hematology" country="China">
        <title>RIG-I, a human homolog gene of RNA helicase, is induced by retinoic acid during the differentiation of acute promyelocytic leukemia cell.</title>
        <authorList>
            <person name="Sun Y.-W."/>
        </authorList>
    </citation>
    <scope>NUCLEOTIDE SEQUENCE [MRNA] (ISOFORM 1)</scope>
    <scope>VARIANT GLU-580</scope>
</reference>
<reference key="2">
    <citation type="journal article" date="2002" name="Biochem. Biophys. Res. Commun.">
        <title>Retinoic acid-inducible gene-I is induced in endothelial cells by LPS and regulates expression of COX-2.</title>
        <authorList>
            <person name="Imaizumi T."/>
            <person name="Aratani S."/>
            <person name="Nakajima T."/>
            <person name="Carlson M."/>
            <person name="Matsumiya T."/>
            <person name="Tanji K."/>
            <person name="Ookawa K."/>
            <person name="Yoshida H."/>
            <person name="Tsuchida S."/>
            <person name="McIntyre T.M."/>
            <person name="Prescott S.M."/>
            <person name="Zimmerman G.A."/>
            <person name="Satoh K."/>
        </authorList>
    </citation>
    <scope>NUCLEOTIDE SEQUENCE [MRNA] (ISOFORM 1)</scope>
    <scope>VARIANT GLU-580</scope>
    <scope>INDUCTION</scope>
</reference>
<reference key="3">
    <citation type="journal article" date="2004" name="Nature">
        <title>DNA sequence and analysis of human chromosome 9.</title>
        <authorList>
            <person name="Humphray S.J."/>
            <person name="Oliver K."/>
            <person name="Hunt A.R."/>
            <person name="Plumb R.W."/>
            <person name="Loveland J.E."/>
            <person name="Howe K.L."/>
            <person name="Andrews T.D."/>
            <person name="Searle S."/>
            <person name="Hunt S.E."/>
            <person name="Scott C.E."/>
            <person name="Jones M.C."/>
            <person name="Ainscough R."/>
            <person name="Almeida J.P."/>
            <person name="Ambrose K.D."/>
            <person name="Ashwell R.I.S."/>
            <person name="Babbage A.K."/>
            <person name="Babbage S."/>
            <person name="Bagguley C.L."/>
            <person name="Bailey J."/>
            <person name="Banerjee R."/>
            <person name="Barker D.J."/>
            <person name="Barlow K.F."/>
            <person name="Bates K."/>
            <person name="Beasley H."/>
            <person name="Beasley O."/>
            <person name="Bird C.P."/>
            <person name="Bray-Allen S."/>
            <person name="Brown A.J."/>
            <person name="Brown J.Y."/>
            <person name="Burford D."/>
            <person name="Burrill W."/>
            <person name="Burton J."/>
            <person name="Carder C."/>
            <person name="Carter N.P."/>
            <person name="Chapman J.C."/>
            <person name="Chen Y."/>
            <person name="Clarke G."/>
            <person name="Clark S.Y."/>
            <person name="Clee C.M."/>
            <person name="Clegg S."/>
            <person name="Collier R.E."/>
            <person name="Corby N."/>
            <person name="Crosier M."/>
            <person name="Cummings A.T."/>
            <person name="Davies J."/>
            <person name="Dhami P."/>
            <person name="Dunn M."/>
            <person name="Dutta I."/>
            <person name="Dyer L.W."/>
            <person name="Earthrowl M.E."/>
            <person name="Faulkner L."/>
            <person name="Fleming C.J."/>
            <person name="Frankish A."/>
            <person name="Frankland J.A."/>
            <person name="French L."/>
            <person name="Fricker D.G."/>
            <person name="Garner P."/>
            <person name="Garnett J."/>
            <person name="Ghori J."/>
            <person name="Gilbert J.G.R."/>
            <person name="Glison C."/>
            <person name="Grafham D.V."/>
            <person name="Gribble S."/>
            <person name="Griffiths C."/>
            <person name="Griffiths-Jones S."/>
            <person name="Grocock R."/>
            <person name="Guy J."/>
            <person name="Hall R.E."/>
            <person name="Hammond S."/>
            <person name="Harley J.L."/>
            <person name="Harrison E.S.I."/>
            <person name="Hart E.A."/>
            <person name="Heath P.D."/>
            <person name="Henderson C.D."/>
            <person name="Hopkins B.L."/>
            <person name="Howard P.J."/>
            <person name="Howden P.J."/>
            <person name="Huckle E."/>
            <person name="Johnson C."/>
            <person name="Johnson D."/>
            <person name="Joy A.A."/>
            <person name="Kay M."/>
            <person name="Keenan S."/>
            <person name="Kershaw J.K."/>
            <person name="Kimberley A.M."/>
            <person name="King A."/>
            <person name="Knights A."/>
            <person name="Laird G.K."/>
            <person name="Langford C."/>
            <person name="Lawlor S."/>
            <person name="Leongamornlert D.A."/>
            <person name="Leversha M."/>
            <person name="Lloyd C."/>
            <person name="Lloyd D.M."/>
            <person name="Lovell J."/>
            <person name="Martin S."/>
            <person name="Mashreghi-Mohammadi M."/>
            <person name="Matthews L."/>
            <person name="McLaren S."/>
            <person name="McLay K.E."/>
            <person name="McMurray A."/>
            <person name="Milne S."/>
            <person name="Nickerson T."/>
            <person name="Nisbett J."/>
            <person name="Nordsiek G."/>
            <person name="Pearce A.V."/>
            <person name="Peck A.I."/>
            <person name="Porter K.M."/>
            <person name="Pandian R."/>
            <person name="Pelan S."/>
            <person name="Phillimore B."/>
            <person name="Povey S."/>
            <person name="Ramsey Y."/>
            <person name="Rand V."/>
            <person name="Scharfe M."/>
            <person name="Sehra H.K."/>
            <person name="Shownkeen R."/>
            <person name="Sims S.K."/>
            <person name="Skuce C.D."/>
            <person name="Smith M."/>
            <person name="Steward C.A."/>
            <person name="Swarbreck D."/>
            <person name="Sycamore N."/>
            <person name="Tester J."/>
            <person name="Thorpe A."/>
            <person name="Tracey A."/>
            <person name="Tromans A."/>
            <person name="Thomas D.W."/>
            <person name="Wall M."/>
            <person name="Wallis J.M."/>
            <person name="West A.P."/>
            <person name="Whitehead S.L."/>
            <person name="Willey D.L."/>
            <person name="Williams S.A."/>
            <person name="Wilming L."/>
            <person name="Wray P.W."/>
            <person name="Young L."/>
            <person name="Ashurst J.L."/>
            <person name="Coulson A."/>
            <person name="Blocker H."/>
            <person name="Durbin R.M."/>
            <person name="Sulston J.E."/>
            <person name="Hubbard T."/>
            <person name="Jackson M.J."/>
            <person name="Bentley D.R."/>
            <person name="Beck S."/>
            <person name="Rogers J."/>
            <person name="Dunham I."/>
        </authorList>
    </citation>
    <scope>NUCLEOTIDE SEQUENCE [LARGE SCALE GENOMIC DNA]</scope>
</reference>
<reference key="4">
    <citation type="submission" date="2005-09" db="EMBL/GenBank/DDBJ databases">
        <authorList>
            <person name="Mural R.J."/>
            <person name="Istrail S."/>
            <person name="Sutton G.G."/>
            <person name="Florea L."/>
            <person name="Halpern A.L."/>
            <person name="Mobarry C.M."/>
            <person name="Lippert R."/>
            <person name="Walenz B."/>
            <person name="Shatkay H."/>
            <person name="Dew I."/>
            <person name="Miller J.R."/>
            <person name="Flanigan M.J."/>
            <person name="Edwards N.J."/>
            <person name="Bolanos R."/>
            <person name="Fasulo D."/>
            <person name="Halldorsson B.V."/>
            <person name="Hannenhalli S."/>
            <person name="Turner R."/>
            <person name="Yooseph S."/>
            <person name="Lu F."/>
            <person name="Nusskern D.R."/>
            <person name="Shue B.C."/>
            <person name="Zheng X.H."/>
            <person name="Zhong F."/>
            <person name="Delcher A.L."/>
            <person name="Huson D.H."/>
            <person name="Kravitz S.A."/>
            <person name="Mouchard L."/>
            <person name="Reinert K."/>
            <person name="Remington K.A."/>
            <person name="Clark A.G."/>
            <person name="Waterman M.S."/>
            <person name="Eichler E.E."/>
            <person name="Adams M.D."/>
            <person name="Hunkapiller M.W."/>
            <person name="Myers E.W."/>
            <person name="Venter J.C."/>
        </authorList>
    </citation>
    <scope>NUCLEOTIDE SEQUENCE [LARGE SCALE GENOMIC DNA]</scope>
</reference>
<reference key="5">
    <citation type="journal article" date="2004" name="Genome Res.">
        <title>The status, quality, and expansion of the NIH full-length cDNA project: the Mammalian Gene Collection (MGC).</title>
        <authorList>
            <consortium name="The MGC Project Team"/>
        </authorList>
    </citation>
    <scope>NUCLEOTIDE SEQUENCE [LARGE SCALE MRNA] (ISOFORM 1)</scope>
    <source>
        <tissue>Brain</tissue>
    </source>
</reference>
<reference key="6">
    <citation type="journal article" date="2007" name="BMC Genomics">
        <title>The full-ORF clone resource of the German cDNA consortium.</title>
        <authorList>
            <person name="Bechtel S."/>
            <person name="Rosenfelder H."/>
            <person name="Duda A."/>
            <person name="Schmidt C.P."/>
            <person name="Ernst U."/>
            <person name="Wellenreuther R."/>
            <person name="Mehrle A."/>
            <person name="Schuster C."/>
            <person name="Bahr A."/>
            <person name="Bloecker H."/>
            <person name="Heubner D."/>
            <person name="Hoerlein A."/>
            <person name="Michel G."/>
            <person name="Wedler H."/>
            <person name="Koehrer K."/>
            <person name="Ottenwaelder B."/>
            <person name="Poustka A."/>
            <person name="Wiemann S."/>
            <person name="Schupp I."/>
        </authorList>
    </citation>
    <scope>NUCLEOTIDE SEQUENCE [LARGE SCALE MRNA] OF 1-748 (ISOFORM 2)</scope>
    <scope>NUCLEOTIDE SEQUENCE [LARGE SCALE MRNA] OF 528-925 (ISOFORMS 1/2)</scope>
    <scope>VARIANT CYS-7</scope>
    <source>
        <tissue>Skin</tissue>
        <tissue>Testis</tissue>
    </source>
</reference>
<reference key="7">
    <citation type="journal article" date="2004" name="Biochem. Cell Biol.">
        <title>Retinoic acid-inducible gene-I is induced by interferon-gamma and regulates the expression of interferon-gamma stimulated gene 15 in MCF-7 cells.</title>
        <authorList>
            <person name="Cui X.-F."/>
            <person name="Imaizumi T."/>
            <person name="Yoshida H."/>
            <person name="Borden E.C."/>
            <person name="Satoh K."/>
        </authorList>
    </citation>
    <scope>INDUCTION</scope>
    <scope>SUBCELLULAR LOCATION</scope>
</reference>
<reference key="8">
    <citation type="journal article" date="2004" name="Life Sci.">
        <title>Expression of retinoic acid-inducible gene-I in vascular smooth muscle cells stimulated with interferon-gamma.</title>
        <authorList>
            <person name="Imaizumi T."/>
            <person name="Yagihashi N."/>
            <person name="Hatakeyama M."/>
            <person name="Yamashita K."/>
            <person name="Ishikawa A."/>
            <person name="Taima K."/>
            <person name="Yoshida H."/>
            <person name="Inoue I."/>
            <person name="Fujita T."/>
            <person name="Yagihashi S."/>
            <person name="Satoh K."/>
        </authorList>
    </citation>
    <scope>INDUCTION</scope>
    <scope>TISSUE SPECIFICITY</scope>
    <scope>SUBCELLULAR LOCATION</scope>
</reference>
<reference key="9">
    <citation type="journal article" date="2004" name="Nat. Immunol.">
        <title>The RNA helicase RIG-I has an essential function in double-stranded RNA-induced innate antiviral responses.</title>
        <authorList>
            <person name="Yoneyama M."/>
            <person name="Kikuchi M."/>
            <person name="Natsukawa T."/>
            <person name="Shinobu N."/>
            <person name="Imaizumi T."/>
            <person name="Miyagishi M."/>
            <person name="Taira K."/>
            <person name="Akira S."/>
            <person name="Fujita T."/>
        </authorList>
    </citation>
    <scope>INDUCTION</scope>
    <scope>MUTAGENESIS OF LYS-270</scope>
    <scope>SUBCELLULAR LOCATION</scope>
    <scope>BINDING TO DOUBLE-STRANDED RNA</scope>
    <scope>FUNCTION</scope>
</reference>
<reference key="10">
    <citation type="journal article" date="2005" name="Cell">
        <title>Identification and characterization of MAVS, a mitochondrial antiviral signaling protein that activates NF-kappaB and IRF 3.</title>
        <authorList>
            <person name="Seth R.B."/>
            <person name="Sun L."/>
            <person name="Ea C.-K."/>
            <person name="Chen Z.J."/>
        </authorList>
    </citation>
    <scope>FUNCTION</scope>
    <scope>INTERACTION WITH MAVS/IPS1</scope>
</reference>
<reference key="11">
    <citation type="journal article" date="2005" name="EMBO J.">
        <title>SIKE is an IKK epsilon/TBK1-associated suppressor of TLR3- and virus-triggered IRF-3 activation pathways.</title>
        <authorList>
            <person name="Huang J."/>
            <person name="Liu T."/>
            <person name="Xu L.-G."/>
            <person name="Chen D."/>
            <person name="Zhai Z."/>
            <person name="Shu H.-B."/>
        </authorList>
    </citation>
    <scope>INTERACTION WITH IKBKE AND TBK1</scope>
</reference>
<reference key="12">
    <citation type="journal article" date="2005" name="J. Virol.">
        <title>Regulating intracellular antiviral defense and permissiveness to hepatitis C virus RNA replication through a cellular RNA helicase, RIG-I.</title>
        <authorList>
            <person name="Sumpter R. Jr."/>
            <person name="Loo Y.-M."/>
            <person name="Foy E."/>
            <person name="Li K."/>
            <person name="Yoneyama M."/>
            <person name="Fujita T."/>
            <person name="Lemon S.M."/>
            <person name="Gale M. Jr."/>
        </authorList>
    </citation>
    <scope>INDUCTION</scope>
    <scope>MUTAGENESIS OF THR-55 AND LYS-270</scope>
    <scope>BINDING TO DOUBLE-STRANDED RNA</scope>
    <scope>FUNCTION</scope>
</reference>
<reference key="13">
    <citation type="journal article" date="2005" name="Mol. Cell">
        <title>VISA is an adapter protein required for virus-triggered IFN-beta Signaling.</title>
        <authorList>
            <person name="Xu L.-G."/>
            <person name="Wang Y.-Y."/>
            <person name="Han K.-J."/>
            <person name="Li L.-Y."/>
            <person name="Zhai Z."/>
            <person name="Shu H.-B."/>
        </authorList>
    </citation>
    <scope>FUNCTION</scope>
    <scope>INTERACTION WITH MAVS/IPS1</scope>
</reference>
<reference key="14">
    <citation type="journal article" date="2005" name="Nat. Immunol.">
        <title>IPS-1, an adaptor triggering RIG-I- and Mda5-mediated type I interferon induction.</title>
        <authorList>
            <person name="Kawai T."/>
            <person name="Takahashi K."/>
            <person name="Sato S."/>
            <person name="Coban C."/>
            <person name="Kumar H."/>
            <person name="Kato H."/>
            <person name="Ishii K.J."/>
            <person name="Takeuchi O."/>
            <person name="Akira S."/>
        </authorList>
    </citation>
    <scope>FUNCTION</scope>
    <scope>INTERACTION WITH MAVS/IPS1</scope>
</reference>
<reference key="15">
    <citation type="journal article" date="2005" name="Proc. Natl. Acad. Sci. U.S.A.">
        <title>Human ISG15 conjugation targets both IFN-induced and constitutively expressed proteins functioning in diverse cellular pathways.</title>
        <authorList>
            <person name="Zhao C."/>
            <person name="Denison C."/>
            <person name="Huibregtse J.M."/>
            <person name="Gygi S.P."/>
            <person name="Krug R.M."/>
        </authorList>
    </citation>
    <scope>IDENTIFICATION BY MASS SPECTROMETRY</scope>
    <scope>ISGYLATION</scope>
</reference>
<reference key="16">
    <citation type="journal article" date="2007" name="Nature">
        <title>TRIM25 RING-finger E3 ubiquitin ligase is essential for RIG-I-mediated antiviral activity.</title>
        <authorList>
            <person name="Gack M.U."/>
            <person name="Shin Y.C."/>
            <person name="Joo C.H."/>
            <person name="Urano T."/>
            <person name="Liang C."/>
            <person name="Sun L."/>
            <person name="Takeuchi O."/>
            <person name="Akira S."/>
            <person name="Chen Z."/>
            <person name="Inoue S."/>
            <person name="Jung J.U."/>
        </authorList>
    </citation>
    <scope>INTERACTION WITH TRIM25</scope>
    <scope>DOMAIN</scope>
    <scope>SUBCELLULAR LOCATION</scope>
    <scope>UBIQUITINATION AT LYS-172</scope>
    <scope>MUTAGENESIS OF LYS-99; LYS-169; LYS-172; LYS-181; LYS-190 AND LYS-193</scope>
</reference>
<reference key="17">
    <citation type="journal article" date="2007" name="Proc. Natl. Acad. Sci. U.S.A.">
        <title>Regulation of innate antiviral defenses through a shared repressor domain in RIG-I and LGP2.</title>
        <authorList>
            <person name="Saito T."/>
            <person name="Hirai R."/>
            <person name="Loo Y.-M."/>
            <person name="Owen D."/>
            <person name="Johnson C.L."/>
            <person name="Sinha S.C."/>
            <person name="Akira S."/>
            <person name="Fujita T."/>
            <person name="Gale M. Jr."/>
        </authorList>
    </citation>
    <scope>FUNCTION</scope>
    <scope>SUBUNIT</scope>
    <scope>RLR CTR DOMAIN</scope>
    <scope>INTERACTION WITH DHX58</scope>
</reference>
<reference key="18">
    <citation type="journal article" date="2007" name="Proc. Natl. Acad. Sci. U.S.A.">
        <title>Negative regulation of the RIG-I signaling by the ubiquitin ligase RNF125.</title>
        <authorList>
            <person name="Arimoto K."/>
            <person name="Takahashi H."/>
            <person name="Hishiki T."/>
            <person name="Konishi H."/>
            <person name="Fujita T."/>
            <person name="Shimotohno K."/>
        </authorList>
    </citation>
    <scope>UBIQUITINATION</scope>
</reference>
<reference key="19">
    <citation type="journal article" date="2008" name="EMBO Rep.">
        <title>The tumour suppressor CYLD is a negative regulator of RIG-I-mediated antiviral response.</title>
        <authorList>
            <person name="Friedman C.S."/>
            <person name="O'Donnell M.A."/>
            <person name="Legarda-Addison D."/>
            <person name="Ng A."/>
            <person name="Cardenas W.B."/>
            <person name="Yount J.S."/>
            <person name="Moran T.M."/>
            <person name="Basler C.F."/>
            <person name="Komuro A."/>
            <person name="Horvath C.M."/>
            <person name="Xavier R."/>
            <person name="Ting A.T."/>
        </authorList>
    </citation>
    <scope>FUNCTION</scope>
    <scope>UBIQUITINATION</scope>
    <scope>INTERACTION WITH CYLD</scope>
</reference>
<reference key="20">
    <citation type="journal article" date="2008" name="J. Virol.">
        <title>Negative feedback regulation of RIG-I-mediated antiviral signaling by interferon-induced ISG15 conjugation.</title>
        <authorList>
            <person name="Kim M.J."/>
            <person name="Hwang S.Y."/>
            <person name="Imaizumi T."/>
            <person name="Yoo J.Y."/>
        </authorList>
    </citation>
    <scope>ISGYLATION</scope>
</reference>
<reference key="21">
    <citation type="journal article" date="2008" name="Nature">
        <title>STING is an endoplasmic reticulum adaptor that facilitates innate immune signalling.</title>
        <authorList>
            <person name="Ishikawa H."/>
            <person name="Barber G.N."/>
        </authorList>
    </citation>
    <scope>INTERACTION WITH STING1</scope>
</reference>
<reference key="22">
    <citation type="journal article" date="2009" name="Cell">
        <title>RNA polymerase III detects cytosolic DNA and induces type I interferons through the RIG-I pathway.</title>
        <authorList>
            <person name="Chiu Y.-H."/>
            <person name="Macmillan J.B."/>
            <person name="Chen Z.J."/>
        </authorList>
    </citation>
    <scope>FUNCTION</scope>
</reference>
<reference key="23">
    <citation type="journal article" date="2009" name="Immunity">
        <title>Recognition of 5' triphosphate by RIG-I helicase requires short blunt double-stranded RNA as contained in panhandle of negative-strand virus.</title>
        <authorList>
            <person name="Schlee M."/>
            <person name="Roth A."/>
            <person name="Hornung V."/>
            <person name="Hagmann C.A."/>
            <person name="Wimmenauer V."/>
            <person name="Barchet W."/>
            <person name="Coch C."/>
            <person name="Janke M."/>
            <person name="Mihailovic A."/>
            <person name="Wardle G."/>
            <person name="Juranek S."/>
            <person name="Kato H."/>
            <person name="Kawai T."/>
            <person name="Poeck H."/>
            <person name="Fitzgerald K.A."/>
            <person name="Takeuchi O."/>
            <person name="Akira S."/>
            <person name="Tuschl T."/>
            <person name="Latz E."/>
            <person name="Ludwig J."/>
            <person name="Hartmann G."/>
        </authorList>
    </citation>
    <scope>FUNCTION</scope>
</reference>
<reference key="24">
    <citation type="journal article" date="2009" name="J. Biol. Chem.">
        <title>Riplet/RNF135, a RING finger protein, ubiquitinates RIG-I to promote interferon-beta induction during the early phase of viral infection.</title>
        <authorList>
            <person name="Oshiumi H."/>
            <person name="Matsumoto M."/>
            <person name="Hatakeyama S."/>
            <person name="Seya T."/>
        </authorList>
    </citation>
    <scope>UBIQUITINATION</scope>
    <scope>INTERACTION WITH RNF135</scope>
</reference>
<reference key="25">
    <citation type="journal article" date="2009" name="J. Biol. Chem.">
        <title>Retinoic acid-induced gene-1 (RIG-I) associates with the actin cytoskeleton via caspase activation and recruitment domain-dependent interactions.</title>
        <authorList>
            <person name="Mukherjee A."/>
            <person name="Morosky S.A."/>
            <person name="Shen L."/>
            <person name="Weber C.R."/>
            <person name="Turner J.R."/>
            <person name="Kim K.S."/>
            <person name="Wang T."/>
            <person name="Coyne C.B."/>
        </authorList>
    </citation>
    <scope>FUNCTION</scope>
    <scope>SUBCELLULAR LOCATION</scope>
</reference>
<reference key="26">
    <citation type="journal article" date="2009" name="J. Biol. Chem.">
        <title>Regulation of signal transduction by enzymatically inactive antiviral RNA helicase proteins MDA5, RIG-I, and LGP2.</title>
        <authorList>
            <person name="Bamming D."/>
            <person name="Horvath C.M."/>
        </authorList>
    </citation>
    <scope>FUNCTION</scope>
    <scope>CATALYTIC ACTIVITY</scope>
    <scope>MUTAGENESIS OF LYS-270; 372-ASP--HIS-375; 409-THR--SER-411; 633-PHE--THR-636; 697-THR--ASP-701 AND 726-GLN--ARG-730</scope>
</reference>
<reference key="27">
    <citation type="journal article" date="2009" name="J. Biol. Chem.">
        <title>The tyrosine kinase c-Src enhances RIG-I (retinoic acid-inducible gene I)-elicited antiviral signaling.</title>
        <authorList>
            <person name="Johnsen I.B."/>
            <person name="Nguyen T.T."/>
            <person name="Bergstroem B."/>
            <person name="Fitzgerald K.A."/>
            <person name="Anthonsen M.W."/>
        </authorList>
    </citation>
    <scope>INTERACTION WITH SRC</scope>
</reference>
<reference key="28">
    <citation type="journal article" date="2009" name="J. Virol.">
        <title>Human respiratory syncytial virus nonstructural protein NS2 antagonizes the activation of beta interferon transcription by interacting with RIG-I.</title>
        <authorList>
            <person name="Ling Z."/>
            <person name="Tran K.C."/>
            <person name="Teng M.N."/>
        </authorList>
    </citation>
    <scope>INTERACTION WITH HRSV PROTEIN NS2 (MICROBIAL INFECTION)</scope>
</reference>
<reference key="29">
    <citation type="journal article" date="2009" name="Nat. Immunol.">
        <title>RIG-I-dependent sensing of poly(dA:dT) through the induction of an RNA polymerase III-transcribed RNA intermediate.</title>
        <authorList>
            <person name="Ablasser A."/>
            <person name="Bauernfeind F."/>
            <person name="Hartmann G."/>
            <person name="Latz E."/>
            <person name="Fitzgerald K.A."/>
            <person name="Hornung V."/>
        </authorList>
    </citation>
    <scope>FUNCTION</scope>
</reference>
<reference key="30">
    <citation type="journal article" date="2009" name="PLoS ONE">
        <title>REUL is a novel E3 ubiquitin ligase and stimulator of retinoic-acid-inducible gene-I.</title>
        <authorList>
            <person name="Gao D."/>
            <person name="Yang Y.K."/>
            <person name="Wang R.P."/>
            <person name="Zhou X."/>
            <person name="Diao F.C."/>
            <person name="Li M.D."/>
            <person name="Zhai Z.H."/>
            <person name="Jiang Z.F."/>
            <person name="Chen D.Y."/>
        </authorList>
    </citation>
    <scope>UBIQUITINATION AT LYS-154; LYS-164 AND LYS-172</scope>
    <scope>INTERACTION WITH RNF135</scope>
    <scope>MUTAGENESIS OF LYS-154; LYS-164 AND LYS-172</scope>
</reference>
<reference key="31">
    <citation type="journal article" date="2009" name="Science">
        <title>Lysine acetylation targets protein complexes and co-regulates major cellular functions.</title>
        <authorList>
            <person name="Choudhary C."/>
            <person name="Kumar C."/>
            <person name="Gnad F."/>
            <person name="Nielsen M.L."/>
            <person name="Rehman M."/>
            <person name="Walther T.C."/>
            <person name="Olsen J.V."/>
            <person name="Mann M."/>
        </authorList>
    </citation>
    <scope>ACETYLATION [LARGE SCALE ANALYSIS] AT LYS-858</scope>
    <scope>IDENTIFICATION BY MASS SPECTROMETRY [LARGE SCALE ANALYSIS]</scope>
</reference>
<reference key="32">
    <citation type="journal article" date="2010" name="Cell">
        <title>NLRC5 negatively regulates the NF-kappaB and type I interferon signaling pathways.</title>
        <authorList>
            <person name="Cui J."/>
            <person name="Zhu L."/>
            <person name="Xia X."/>
            <person name="Wang H.Y."/>
            <person name="Legras X."/>
            <person name="Hong J."/>
            <person name="Ji J."/>
            <person name="Shen P."/>
            <person name="Zheng S."/>
            <person name="Chen Z.J."/>
            <person name="Wang R.F."/>
        </authorList>
    </citation>
    <scope>INTERACTION WITH NLRC5</scope>
</reference>
<reference key="33">
    <citation type="journal article" date="2010" name="Cell Res.">
        <title>The ubiquitin-specific protease 17 is involved in virus-triggered type I IFN signaling.</title>
        <authorList>
            <person name="Chen R."/>
            <person name="Zhang L."/>
            <person name="Zhong B."/>
            <person name="Tan B."/>
            <person name="Liu Y."/>
            <person name="Shu H.B."/>
        </authorList>
    </citation>
    <scope>UBIQUITINATION</scope>
    <scope>DEUBIQUITINATION BY USP17L2</scope>
</reference>
<reference key="34">
    <citation type="journal article" date="2010" name="Crit. Rev. Immunol.">
        <title>Function and regulation of retinoic acid-inducible gene-I.</title>
        <authorList>
            <person name="Matsumiya T."/>
            <person name="Stafforini D.M."/>
        </authorList>
    </citation>
    <scope>REVIEW ON FUNCTION</scope>
</reference>
<reference key="35">
    <citation type="journal article" date="2010" name="Eur. J. Immunol.">
        <title>DEAD/H BOX 3 (DDX3) helicase binds the RIG-I adaptor IPS-1 to up-regulate IFN-beta-inducing potential.</title>
        <authorList>
            <person name="Oshiumi H."/>
            <person name="Sakai K."/>
            <person name="Matsumoto M."/>
            <person name="Seya T."/>
        </authorList>
    </citation>
    <scope>INTERACTION WITH DDX3X</scope>
</reference>
<reference key="36">
    <citation type="journal article" date="2010" name="J. Virol.">
        <title>Z proteins of New World arenaviruses bind RIG-I and interfere with type I interferon induction.</title>
        <authorList>
            <person name="Fan L."/>
            <person name="Briese T."/>
            <person name="Lipkin W.I."/>
        </authorList>
    </citation>
    <scope>INTERACTION WITH NEW WORLD ARENAVIRUSES PROTEIN Z (MICROBIAL INFECTION)</scope>
</reference>
<reference key="37">
    <citation type="journal article" date="2011" name="BMC Syst. Biol.">
        <title>Initial characterization of the human central proteome.</title>
        <authorList>
            <person name="Burkard T.R."/>
            <person name="Planyavsky M."/>
            <person name="Kaupe I."/>
            <person name="Breitwieser F.P."/>
            <person name="Buerckstuemmer T."/>
            <person name="Bennett K.L."/>
            <person name="Superti-Furga G."/>
            <person name="Colinge J."/>
        </authorList>
    </citation>
    <scope>IDENTIFICATION BY MASS SPECTROMETRY [LARGE SCALE ANALYSIS]</scope>
</reference>
<reference key="38">
    <citation type="journal article" date="2011" name="Immunity">
        <title>Immune signaling by RIG-I-like receptors.</title>
        <authorList>
            <person name="Loo Y.M."/>
            <person name="Gale M. Jr."/>
        </authorList>
    </citation>
    <scope>REVIEW ON FUNCTION</scope>
</reference>
<reference key="39">
    <citation type="journal article" date="2011" name="Immunol. Rev.">
        <title>RIG-I-like receptors: cytoplasmic sensors for non-self RNA.</title>
        <authorList>
            <person name="Kato H."/>
            <person name="Takahasi K."/>
            <person name="Fujita T."/>
        </authorList>
    </citation>
    <scope>REVIEW ON FUNCTION</scope>
</reference>
<reference key="40">
    <citation type="journal article" date="2011" name="J. Biol. Chem.">
        <title>ARF-like protein 16 (ARL16) inhibits RIG-I by binding with its C-terminal domain in a GTP-dependent manner.</title>
        <authorList>
            <person name="Yang Y.K."/>
            <person name="Qu H."/>
            <person name="Gao D."/>
            <person name="Di W."/>
            <person name="Chen H.W."/>
            <person name="Guo X."/>
            <person name="Zhai Z.H."/>
            <person name="Chen D.Y."/>
        </authorList>
    </citation>
    <scope>INTERACTION WITH ARL16</scope>
</reference>
<reference key="41">
    <citation type="journal article" date="2011" name="J. Immunol.">
        <title>Innate immune responses in human monocyte-derived dendritic cells are highly dependent on the size and the 5' phosphorylation of RNA molecules.</title>
        <authorList>
            <person name="Jiang M."/>
            <person name="Osterlund P."/>
            <person name="Sarin L.P."/>
            <person name="Poranen M.M."/>
            <person name="Bamford D.H."/>
            <person name="Guo D."/>
            <person name="Julkunen I."/>
        </authorList>
    </citation>
    <scope>FUNCTION</scope>
</reference>
<reference key="42">
    <citation type="journal article" date="2011" name="J. Immunol.">
        <title>IFN-induced TPR protein IFIT3 potentiates antiviral signaling by bridging MAVS and TBK1.</title>
        <authorList>
            <person name="Liu X.Y."/>
            <person name="Chen W."/>
            <person name="Wei B."/>
            <person name="Shan Y.F."/>
            <person name="Wang C."/>
        </authorList>
    </citation>
    <scope>INTERACTION WITH IFIT3</scope>
</reference>
<reference key="43">
    <citation type="journal article" date="2011" name="J. Interferon Cytokine Res.">
        <title>Retinoic acid-inducible gene-I-like receptors.</title>
        <authorList>
            <person name="Onoguchi K."/>
            <person name="Yoneyama M."/>
            <person name="Fujita T."/>
        </authorList>
    </citation>
    <scope>REVIEW ON FUNCTION</scope>
</reference>
<reference key="44">
    <citation type="journal article" date="2011" name="J. Virol.">
        <title>Phosphorylation of RIG-I by casein kinase II inhibits its antiviral response.</title>
        <authorList>
            <person name="Sun Z."/>
            <person name="Ren H."/>
            <person name="Liu Y."/>
            <person name="Teeling J.L."/>
            <person name="Gu J."/>
        </authorList>
    </citation>
    <scope>PHOSPHORYLATION AT THR-770; SER-854 AND SER-855</scope>
</reference>
<reference key="45">
    <citation type="journal article" date="2011" name="Mol. Cell. Biol.">
        <title>DDX60, a DEXD/H box helicase, is a novel antiviral factor promoting RIG-I-like receptor-mediated signaling.</title>
        <authorList>
            <person name="Miyashita M."/>
            <person name="Oshiumi H."/>
            <person name="Matsumoto M."/>
            <person name="Seya T."/>
        </authorList>
    </citation>
    <scope>INTERACTION WITH DDX60</scope>
</reference>
<reference key="46">
    <citation type="journal article" date="2011" name="Nat. Immunol.">
        <title>ZAPS is a potent stimulator of signaling mediated by the RNA helicase RIG-I during antiviral responses.</title>
        <authorList>
            <person name="Hayakawa S."/>
            <person name="Shiratori S."/>
            <person name="Yamato H."/>
            <person name="Kameyama T."/>
            <person name="Kitatsuji C."/>
            <person name="Kashigi F."/>
            <person name="Goto S."/>
            <person name="Kameoka S."/>
            <person name="Fujikura D."/>
            <person name="Yamada T."/>
            <person name="Mizutani T."/>
            <person name="Kazumata M."/>
            <person name="Sato M."/>
            <person name="Tanaka J."/>
            <person name="Asaka M."/>
            <person name="Ohba Y."/>
            <person name="Miyazaki T."/>
            <person name="Imamura M."/>
            <person name="Takaoka A."/>
        </authorList>
    </citation>
    <scope>INTERACTION WITH ZC3HAV1</scope>
    <scope>SUBCELLULAR LOCATION</scope>
</reference>
<reference key="47">
    <citation type="journal article" date="2011" name="Virol. J.">
        <title>Rotavirus nonstructural protein 1 antagonizes innate immune response by interacting with retinoic acid inducible gene I.</title>
        <authorList>
            <person name="Qin L."/>
            <person name="Ren L."/>
            <person name="Zhou Z."/>
            <person name="Lei X."/>
            <person name="Chen L."/>
            <person name="Xue Q."/>
            <person name="Liu X."/>
            <person name="Wang J."/>
            <person name="Hung T."/>
        </authorList>
    </citation>
    <scope>INTERACTION WITH ROTAVIRUS PROTEIN NSP1 (MICROBIAL INFECTION)</scope>
</reference>
<reference key="48">
    <citation type="journal article" date="2012" name="J. Virol.">
        <title>Herpes simplex virus 1 tegument protein US11 downmodulates the RLR signaling pathway via direct interaction with RIG-I and MDA-5.</title>
        <authorList>
            <person name="Xing J."/>
            <person name="Wang S."/>
            <person name="Lin R."/>
            <person name="Mossman K.L."/>
            <person name="Zheng C."/>
        </authorList>
    </citation>
    <scope>INTERACTION WITH HERPES SIMPLEX VIRUS 1 PROTEIN US11 (MICROBIAL INFECTION)</scope>
</reference>
<reference key="49">
    <citation type="journal article" date="2012" name="Cell Host Microbe">
        <title>The mitochondrial targeting chaperone 14-3-3epsilon regulates a RIG-I translocon that mediates membrane association and innate antiviral immunity.</title>
        <authorList>
            <person name="Liu H.M."/>
            <person name="Loo Y.M."/>
            <person name="Horner S.M."/>
            <person name="Zornetzer G.A."/>
            <person name="Katze M.G."/>
            <person name="Gale M. Jr."/>
        </authorList>
    </citation>
    <scope>INTERACTION WITH YWHAE</scope>
</reference>
<reference key="50">
    <citation type="journal article" date="2013" name="Immunol. Cell Biol.">
        <title>Mitochondrially localised MUL1 is a novel modulator of antiviral signaling.</title>
        <authorList>
            <person name="Jenkins K."/>
            <person name="Khoo J.J."/>
            <person name="Sadler A."/>
            <person name="Piganis R."/>
            <person name="Wang D."/>
            <person name="Borg N.A."/>
            <person name="Hjerrild K."/>
            <person name="Gould J."/>
            <person name="Thomas B.J."/>
            <person name="Nagley P."/>
            <person name="Hertzog P.J."/>
            <person name="Mansell A."/>
        </authorList>
    </citation>
    <scope>SUMOYLATION BY MUL1</scope>
</reference>
<reference key="51">
    <citation type="journal article" date="2013" name="J. Virol.">
        <title>Negative regulation of RIG-I-mediated innate antiviral signaling by SEC14L1.</title>
        <authorList>
            <person name="Li M.T."/>
            <person name="Di W."/>
            <person name="Xu H."/>
            <person name="Yang Y.K."/>
            <person name="Chen H.W."/>
            <person name="Zhang F.X."/>
            <person name="Zhai Z.H."/>
            <person name="Chen D.Y."/>
        </authorList>
    </citation>
    <scope>INTERACTION WITH SEC14L1</scope>
</reference>
<reference key="52">
    <citation type="journal article" date="2013" name="PLoS Pathog.">
        <title>A distinct role of Riplet-mediated K63-Linked polyubiquitination of the RIG-I repressor domain in human antiviral innate immune responses.</title>
        <authorList>
            <person name="Oshiumi H."/>
            <person name="Miyashita M."/>
            <person name="Matsumoto M."/>
            <person name="Seya T."/>
        </authorList>
    </citation>
    <scope>INTERACTION WITH RNF135</scope>
    <scope>DOMAIN</scope>
    <scope>REGION</scope>
    <scope>MUTAGENESIS OF LYS-788; LYS-849; LYS-851; LYS-888; LYS-907 AND LYS-909</scope>
</reference>
<reference key="53">
    <citation type="journal article" date="2013" name="Immunity">
        <title>Dephosphorylation of the RNA sensors RIG-I and MDA5 by the phosphatase PP1 is essential for innate immune signaling.</title>
        <authorList>
            <person name="Wies E."/>
            <person name="Wang M.K."/>
            <person name="Maharaj N.P."/>
            <person name="Chen K."/>
            <person name="Zhou S."/>
            <person name="Finberg R.W."/>
            <person name="Gack M.U."/>
        </authorList>
    </citation>
    <scope>PHOSPHORYLATION AT SER-8 AND THR-170</scope>
    <scope>DEPHOSPHORYLATION (MICROBIAL INFECTION)</scope>
</reference>
<reference key="54">
    <citation type="journal article" date="2014" name="J. Mol. Cell Biol.">
        <title>TRIM4 modulates type I interferon induction and cellular antiviral response by targeting RIG-I for K63-linked ubiquitination.</title>
        <authorList>
            <person name="Yan J."/>
            <person name="Li Q."/>
            <person name="Mao A.P."/>
            <person name="Hu M.M."/>
            <person name="Shu H.B."/>
        </authorList>
    </citation>
    <scope>UBIQUITINATION AT LYS-154; LYS-164 AND LYS-172 BY TRIM4</scope>
</reference>
<reference key="55">
    <citation type="journal article" date="2014" name="J. Virol.">
        <title>Enterovirus 2Apro targets MDA5 and MAVS in infected cells.</title>
        <authorList>
            <person name="Feng Q."/>
            <person name="Langereis M.A."/>
            <person name="Lork M."/>
            <person name="Nguyen M."/>
            <person name="Hato S.V."/>
            <person name="Lanke K."/>
            <person name="Emdad L."/>
            <person name="Bhoopathi P."/>
            <person name="Fisher P.B."/>
            <person name="Lloyd R.E."/>
            <person name="van Kuppeveld F.J."/>
        </authorList>
    </citation>
    <scope>PROTEOLYTIC CLEAVAGE (MICROBIAL INFECTION)</scope>
</reference>
<reference key="56">
    <citation type="journal article" date="2014" name="Cell Res.">
        <title>USP3 inhibits type I interferon signaling by deubiquitinating RIG-I-like receptors.</title>
        <authorList>
            <person name="Cui J."/>
            <person name="Song Y."/>
            <person name="Li Y."/>
            <person name="Zhu Q."/>
            <person name="Tan P."/>
            <person name="Qin Y."/>
            <person name="Wang H.Y."/>
            <person name="Wang R.F."/>
        </authorList>
    </citation>
    <scope>FUNCTION</scope>
    <scope>DEUBIQUITINATION BY USP3</scope>
</reference>
<reference key="57">
    <citation type="journal article" date="2014" name="J. Virol.">
        <title>Hijacking of RIG-I signaling proteins into virus-induced cytoplasmic structures correlates with the inhibition of type I interferon responses.</title>
        <authorList>
            <person name="Santiago F.W."/>
            <person name="Covaleda L.M."/>
            <person name="Sanchez-Aparicio M.T."/>
            <person name="Silvas J.A."/>
            <person name="Diaz-Vizarreta A.C."/>
            <person name="Patel J.R."/>
            <person name="Popov V."/>
            <person name="Yu X.J."/>
            <person name="Garcia-Sastre A."/>
            <person name="Aguilar P.V."/>
        </authorList>
    </citation>
    <scope>INTERACTION WITH SFTSV NSS (MICROBIAL INFECTION)</scope>
</reference>
<reference key="58">
    <citation type="journal article" date="2015" name="EMBO J.">
        <title>A non-canonical role of the p97 complex in RIG-I antiviral signaling.</title>
        <authorList>
            <person name="Hao Q."/>
            <person name="Jiao S."/>
            <person name="Shi Z."/>
            <person name="Li C."/>
            <person name="Meng X."/>
            <person name="Zhang Z."/>
            <person name="Wang Y."/>
            <person name="Song X."/>
            <person name="Wang W."/>
            <person name="Zhang R."/>
            <person name="Zhao Y."/>
            <person name="Wong C.C."/>
            <person name="Zhou Z."/>
        </authorList>
    </citation>
    <scope>UBIQUITINATION AT LYS-181 BY RNF125</scope>
    <scope>INTERACTION WITH VCP</scope>
    <scope>MUTAGENESIS OF LYS-181</scope>
</reference>
<reference key="59">
    <citation type="journal article" date="2015" name="J. Innate Immun.">
        <title>ECSIT bridges RIG-I-like receptors to VISA in signaling events of innate antiviral responses.</title>
        <authorList>
            <person name="Lei C.Q."/>
            <person name="Zhang Y."/>
            <person name="Li M."/>
            <person name="Jiang L.Q."/>
            <person name="Zhong B."/>
            <person name="Kim Y.H."/>
            <person name="Shu H.B."/>
        </authorList>
    </citation>
    <scope>INTERACTION WITH ECSIT</scope>
</reference>
<reference key="60">
    <citation type="journal article" date="2016" name="Sci. Rep.">
        <title>The nucleolar protein GLTSCR2 is required for efficient viral replication.</title>
        <authorList>
            <person name="Wang P."/>
            <person name="Meng W."/>
            <person name="Han S.C."/>
            <person name="Li C.C."/>
            <person name="Wang X.J."/>
            <person name="Wang X.J."/>
        </authorList>
    </citation>
    <scope>INTERACTION WITH NOP53</scope>
</reference>
<reference key="61">
    <citation type="journal article" date="2016" name="Cell Host Microbe">
        <title>A Viral Deamidase Targets the Helicase Domain of RIG-I to Block RNA-Induced Activation.</title>
        <authorList>
            <person name="Zhao J."/>
            <person name="Zeng Y."/>
            <person name="Xu S."/>
            <person name="Chen J."/>
            <person name="Shen G."/>
            <person name="Yu C."/>
            <person name="Knipe D."/>
            <person name="Yuan W."/>
            <person name="Peng J."/>
            <person name="Xu W."/>
            <person name="Zhang C."/>
            <person name="Xia Z."/>
            <person name="Feng P."/>
        </authorList>
    </citation>
    <scope>INTERACTION WITH HERPES SIMPLEX VIRUS 1 PROTEIN UL37 (MICROBIAL INFECTION)</scope>
    <scope>DEAMIDATION AT ASN-495 AND ASN-549</scope>
    <scope>MUTAGENESIS OF ASN-495 AND ASN-549</scope>
</reference>
<reference key="62">
    <citation type="journal article" date="2015" name="Am. J. Hum. Genet.">
        <title>Mutations in DDX58, which encodes RIG-I, cause atypical Singleton-Merten syndrome.</title>
        <authorList>
            <person name="Jang M.A."/>
            <person name="Kim E.K."/>
            <person name="Now H."/>
            <person name="Nguyen N.T."/>
            <person name="Kim W.J."/>
            <person name="Yoo J.Y."/>
            <person name="Lee J."/>
            <person name="Jeong Y.M."/>
            <person name="Kim C.H."/>
            <person name="Kim O.H."/>
            <person name="Sohn S."/>
            <person name="Nam S.H."/>
            <person name="Hong Y."/>
            <person name="Lee Y.S."/>
            <person name="Chang S.A."/>
            <person name="Jang S.Y."/>
            <person name="Kim J.W."/>
            <person name="Lee M.S."/>
            <person name="Lim S.Y."/>
            <person name="Sung K.S."/>
            <person name="Park K.T."/>
            <person name="Kim B.J."/>
            <person name="Lee J.H."/>
            <person name="Kim D.K."/>
            <person name="Kee C."/>
            <person name="Ki C.S."/>
        </authorList>
    </citation>
    <scope>INVOLVEMENT IN SGMRT2</scope>
    <scope>VARIANTS SGMRT2 PHE-268 AND ALA-373</scope>
    <scope>CHARACTERIZATION OF VARIANTS SGMRT2 PHE-268 AND ALA-373</scope>
</reference>
<reference key="63">
    <citation type="journal article" date="2016" name="EMBO J.">
        <title>HDAC6 regulates cellular viral RNA sensing by deacetylation of RIG-I.</title>
        <authorList>
            <person name="Choi S.J."/>
            <person name="Lee H.C."/>
            <person name="Kim J.H."/>
            <person name="Park S.Y."/>
            <person name="Kim T.H."/>
            <person name="Lee W.K."/>
            <person name="Jang D.J."/>
            <person name="Yoon J.E."/>
            <person name="Choi Y.I."/>
            <person name="Kim S."/>
            <person name="Ma J."/>
            <person name="Kim C.J."/>
            <person name="Yao T.P."/>
            <person name="Jung J.U."/>
            <person name="Lee J.Y."/>
            <person name="Lee J.S."/>
        </authorList>
    </citation>
    <scope>ACETYLATION AT LYS-909</scope>
    <scope>DEACETYLATION BY HDAC6</scope>
    <scope>MUTAGENESIS OF LYS-909</scope>
</reference>
<reference key="64">
    <citation type="journal article" date="2016" name="EMBO Rep.">
        <title>RNF123 has an E3 ligase-independent function in RIG-I-like receptor-mediated antiviral signaling.</title>
        <authorList>
            <person name="Wang S."/>
            <person name="Yang Y.K."/>
            <person name="Chen T."/>
            <person name="Zhang H."/>
            <person name="Yang W.W."/>
            <person name="Song S.S."/>
            <person name="Zhai Z.H."/>
            <person name="Chen D.Y."/>
        </authorList>
    </citation>
    <scope>INTERACTION WITH RNF123</scope>
</reference>
<reference key="65">
    <citation type="journal article" date="2017" name="Nat. Commun.">
        <title>Ube2D3 and Ube2N are essential for RIG-I-mediated MAVS aggregation in antiviral innate immunity.</title>
        <authorList>
            <person name="Shi Y."/>
            <person name="Yuan B."/>
            <person name="Zhu W."/>
            <person name="Zhang R."/>
            <person name="Li L."/>
            <person name="Hao X."/>
            <person name="Chen S."/>
            <person name="Hou F."/>
        </authorList>
    </citation>
    <scope>FUNCTION</scope>
    <scope>INTERACTION WITH RNF135; UBE2D3 AND UBE2N</scope>
    <scope>UBIQUITINATION AT LYS-48; LYS-96 AND LYS-172 BY RNF135</scope>
</reference>
<reference key="66">
    <citation type="journal article" date="2017" name="Cell Rep.">
        <title>The E3 Ubiquitin Ligase TRIM40 Attenuates Antiviral Immune Responses by Targeting MDA5 and RIG-I.</title>
        <authorList>
            <person name="Zhao C."/>
            <person name="Jia M."/>
            <person name="Song H."/>
            <person name="Yu Z."/>
            <person name="Wang W."/>
            <person name="Li Q."/>
            <person name="Zhang L."/>
            <person name="Zhao W."/>
            <person name="Cao X."/>
        </authorList>
    </citation>
    <scope>FUNCTION</scope>
    <scope>UBIQUITINATION BY TRIM40</scope>
</reference>
<reference key="67">
    <citation type="journal article" date="2018" name="EMBO J.">
        <title>LRRC25 inhibits type I IFN signaling by targeting ISG15-associated RIG-I for autophagic degradation.</title>
        <authorList>
            <person name="Du Y."/>
            <person name="Duan T."/>
            <person name="Feng Y."/>
            <person name="Liu Q."/>
            <person name="Lin M."/>
            <person name="Cui J."/>
            <person name="Wang R.F."/>
        </authorList>
    </citation>
    <scope>INTERACTION WITH LRRC25</scope>
</reference>
<reference key="68">
    <citation type="journal article" date="2018" name="Immunity">
        <title>The zinc-finger protein ZCCHC3 binds RNA and facilitates viral RNA sensing and activation of the RIG-I-like receptors.</title>
        <authorList>
            <person name="Lian H."/>
            <person name="Zang R."/>
            <person name="Wei J."/>
            <person name="Ye W."/>
            <person name="Hu M.M."/>
            <person name="Chen Y.D."/>
            <person name="Zhang X.N."/>
            <person name="Guo Y."/>
            <person name="Lei C.Q."/>
            <person name="Yang Q."/>
            <person name="Luo W.W."/>
            <person name="Li S."/>
            <person name="Shu H.B."/>
        </authorList>
    </citation>
    <scope>INTERACTION WITH ZCCHC3</scope>
    <scope>UBIQUITINATION</scope>
</reference>
<reference key="69">
    <citation type="journal article" date="2018" name="J. Virol.">
        <title>Paramyxovirus V Proteins Interact with the RIG-I/TRIM25 Regulatory Complex and Inhibit RIG-I Signaling.</title>
        <authorList>
            <person name="Sanchez-Aparicio M.T."/>
            <person name="Feinman L.J."/>
            <person name="Garcia-Sastre A."/>
            <person name="Shaw M.L."/>
        </authorList>
    </citation>
    <scope>INTERACTION WITH PARAMYXOVIRUSES V PROTEIN (MICROBIAL INFECTION)</scope>
</reference>
<reference key="70">
    <citation type="journal article" date="2019" name="Cell">
        <title>Ubiquitin-Dependent and -Independent Roles of E3 Ligase RIPLET in Innate Immunity.</title>
        <authorList>
            <person name="Cadena C."/>
            <person name="Ahmad S."/>
            <person name="Xavier A."/>
            <person name="Willemsen J."/>
            <person name="Park S."/>
            <person name="Park J.W."/>
            <person name="Oh S.W."/>
            <person name="Fujita T."/>
            <person name="Hou F."/>
            <person name="Binder M."/>
            <person name="Hur S."/>
        </authorList>
    </citation>
    <scope>FUNCTION</scope>
    <scope>SUBUNIT</scope>
    <scope>INTERACTION WITH RNF135</scope>
    <scope>UBIQUITINATION BY RNF135</scope>
</reference>
<reference key="71">
    <citation type="journal article" date="2020" name="EMBO Rep.">
        <title>Autoimmunity gene IRGM suppresses cGAS-STING and RIG-I-MAVS signaling to control interferon response.</title>
        <authorList>
            <person name="Jena K.K."/>
            <person name="Mehto S."/>
            <person name="Nath P."/>
            <person name="Chauhan N.R."/>
            <person name="Sahu R."/>
            <person name="Dhar K."/>
            <person name="Das S.K."/>
            <person name="Kolapalli S.P."/>
            <person name="Murmu K.C."/>
            <person name="Jain A."/>
            <person name="Krishna S."/>
            <person name="Sahoo B.S."/>
            <person name="Chattopadhyay S."/>
            <person name="Rusten T.E."/>
            <person name="Prasad P."/>
            <person name="Chauhan S."/>
            <person name="Chauhan S."/>
        </authorList>
    </citation>
    <scope>INTERACTION WITH IRGM</scope>
    <scope>PROTEIN DEGRADATION</scope>
</reference>
<reference key="72">
    <citation type="journal article" date="2020" name="PLoS Pathog.">
        <title>USP27X negatively regulates antiviral signaling by deubiquitinating RIG-I.</title>
        <authorList>
            <person name="Tao X."/>
            <person name="Chu B."/>
            <person name="Xin D."/>
            <person name="Li L."/>
            <person name="Sun Q."/>
        </authorList>
    </citation>
    <scope>UBIQUITINATION</scope>
    <scope>DEUBIQUITINATION BY USP27X</scope>
</reference>
<reference key="73">
    <citation type="journal article" date="2020" name="Cell. Signal.">
        <title>Dual targeting of RIG-I and MAVS by MARCH5 mitochondria ubiquitin ligase in innate immunity.</title>
        <authorList>
            <person name="Park Y.J."/>
            <person name="Oanh N.T.K."/>
            <person name="Heo J."/>
            <person name="Kim S.G."/>
            <person name="Lee H.S."/>
            <person name="Lee H."/>
            <person name="Lee J.H."/>
            <person name="Kang H.C."/>
            <person name="Lim W."/>
            <person name="Yoo Y.S."/>
            <person name="Cho H."/>
        </authorList>
    </citation>
    <scope>UBIQUITINATION AT LYS-193 AND LYS-203</scope>
    <scope>PHOSPHORYLATION AT SER-8</scope>
    <scope>MUTAGENESIS OF SER-8</scope>
    <scope>SUBUNIT</scope>
</reference>
<reference key="74">
    <citation type="journal article" date="2021" name="Cell Rep.">
        <title>METTL3 regulates viral m6A RNA modification and host cell innate immune responses during SARS-CoV-2 infection.</title>
        <authorList>
            <person name="Li N."/>
            <person name="Hui H."/>
            <person name="Bray B."/>
            <person name="Gonzalez G.M."/>
            <person name="Zeller M."/>
            <person name="Anderson K.G."/>
            <person name="Knight R."/>
            <person name="Smith D."/>
            <person name="Wang Y."/>
            <person name="Carlin A.F."/>
            <person name="Rana T.M."/>
        </authorList>
    </citation>
    <scope>FUNCTION</scope>
</reference>
<reference key="75">
    <citation type="journal article" date="2021" name="Elife">
        <title>RTN3 inhibits RIG-I-mediated antiviral responses by impairing TRIM25-mediated K63-linked polyubiquitination.</title>
        <authorList>
            <person name="Yang Z."/>
            <person name="Wang J."/>
            <person name="He B."/>
            <person name="Zhang X."/>
            <person name="Li X."/>
            <person name="Kuang E."/>
        </authorList>
    </citation>
    <scope>INTERACTION WITH RTN3</scope>
</reference>
<reference key="76">
    <citation type="journal article" date="2022" name="J. Virol.">
        <title>The US3 Kinase of Herpes Simplex Virus Phosphorylates the RNA Sensor RIG-I To Suppress Innate Immunity.</title>
        <authorList>
            <person name="van Gent M."/>
            <person name="Chiang J.J."/>
            <person name="Muppala S."/>
            <person name="Chiang C."/>
            <person name="Azab W."/>
            <person name="Kattenhorn L."/>
            <person name="Knipe D.M."/>
            <person name="Osterrieder N."/>
            <person name="Gack M.U."/>
        </authorList>
    </citation>
    <scope>FUNCTION</scope>
    <scope>PHOSPHORYLATION AT SER-8 (MICROBIAL INFECTION)</scope>
</reference>
<reference key="77">
    <citation type="journal article" date="2022" name="Cell Rep.">
        <title>The RNA helicase DHX16 recognizes specific viral RNA to trigger RIG-I-dependent innate antiviral immunity.</title>
        <authorList>
            <person name="Hage A."/>
            <person name="Bharaj P."/>
            <person name="van Tol S."/>
            <person name="Giraldo M.I."/>
            <person name="Gonzalez-Orozco M."/>
            <person name="Valerdi K.M."/>
            <person name="Warren A.N."/>
            <person name="Aguilera-Aguirre L."/>
            <person name="Xie X."/>
            <person name="Widen S.G."/>
            <person name="Moulton H.M."/>
            <person name="Lee B."/>
            <person name="Johnson J.R."/>
            <person name="Krogan N.J."/>
            <person name="Garcia-Sastre A."/>
            <person name="Shi P.Y."/>
            <person name="Freiberg A.N."/>
            <person name="Rajsbaum R."/>
        </authorList>
    </citation>
    <scope>FUNCTION</scope>
    <scope>INTERACTION WITH DHX16</scope>
</reference>
<reference key="78">
    <citation type="journal article" date="2023" name="Front. Immunol.">
        <title>Interferon alpha inducible protein 6 is a negative regulator of innate immune responses by modulating RIG-I activation.</title>
        <authorList>
            <person name="Villamayor L."/>
            <person name="Rivero V."/>
            <person name="Lopez-Garcia D."/>
            <person name="Topham D.J."/>
            <person name="Martinez-Sobrido L."/>
            <person name="Nogales A."/>
            <person name="DeDiego M.L."/>
        </authorList>
    </citation>
    <scope>FUNCTION</scope>
    <scope>INTERACTION WITH IFI6</scope>
</reference>
<reference key="79">
    <citation type="journal article" date="2008" name="Mol. Cell">
        <title>The C-terminal regulatory domain is the RNA 5'-triphosphate sensor of RIG-I.</title>
        <authorList>
            <person name="Cui S."/>
            <person name="Eisenaecher K."/>
            <person name="Kirchhofer A."/>
            <person name="Brzozka K."/>
            <person name="Lammens A."/>
            <person name="Lammens K."/>
            <person name="Fujita T."/>
            <person name="Conzelmann K.-K."/>
            <person name="Krug A."/>
            <person name="Hopfner K.-P."/>
        </authorList>
    </citation>
    <scope>X-RAY CRYSTALLOGRAPHY (2.7 ANGSTROMS) OF 802-925 IN COMPLEX WITH ZINC IONS</scope>
</reference>
<reference key="80">
    <citation type="journal article" date="2008" name="Mol. Cell">
        <title>Nonself RNA-sensing mechanism of RIG-I helicase and activation of antiviral immune responses.</title>
        <authorList>
            <person name="Takahasi K."/>
            <person name="Yoneyama M."/>
            <person name="Nishihori T."/>
            <person name="Hirai R."/>
            <person name="Kumeta H."/>
            <person name="Narita R."/>
            <person name="Gale M. Jr."/>
            <person name="Inagaki F."/>
            <person name="Fujita T."/>
        </authorList>
    </citation>
    <scope>STRUCTURE BY NMR OF 792-925</scope>
</reference>
<reference key="81">
    <citation type="journal article" date="2014" name="Mol. Cell">
        <title>Molecular imprinting as a signal-activation mechanism of the viral RNA sensor RIG-I.</title>
        <authorList>
            <person name="Wu B."/>
            <person name="Peisley A."/>
            <person name="Tetrault D."/>
            <person name="Li Z."/>
            <person name="Egelman E.H."/>
            <person name="Magor K.E."/>
            <person name="Walz T."/>
            <person name="Penczek P.A."/>
            <person name="Hur S."/>
        </authorList>
    </citation>
    <scope>X-RAY CRYSTALLOGRAPHY (3.4 ANGSTROMS) OF 1-201 IN COMPLEX WITH MAVS</scope>
    <scope>SUBUNIT</scope>
</reference>
<organism>
    <name type="scientific">Homo sapiens</name>
    <name type="common">Human</name>
    <dbReference type="NCBI Taxonomy" id="9606"/>
    <lineage>
        <taxon>Eukaryota</taxon>
        <taxon>Metazoa</taxon>
        <taxon>Chordata</taxon>
        <taxon>Craniata</taxon>
        <taxon>Vertebrata</taxon>
        <taxon>Euteleostomi</taxon>
        <taxon>Mammalia</taxon>
        <taxon>Eutheria</taxon>
        <taxon>Euarchontoglires</taxon>
        <taxon>Primates</taxon>
        <taxon>Haplorrhini</taxon>
        <taxon>Catarrhini</taxon>
        <taxon>Hominidae</taxon>
        <taxon>Homo</taxon>
    </lineage>
</organism>
<feature type="chain" id="PRO_0000144093" description="Antiviral innate immune response receptor RIG-I">
    <location>
        <begin position="1"/>
        <end position="925"/>
    </location>
</feature>
<feature type="domain" description="CARD 1">
    <location>
        <begin position="1"/>
        <end position="87"/>
    </location>
</feature>
<feature type="domain" description="CARD 2">
    <location>
        <begin position="92"/>
        <end position="172"/>
    </location>
</feature>
<feature type="domain" description="Helicase ATP-binding" evidence="2">
    <location>
        <begin position="251"/>
        <end position="430"/>
    </location>
</feature>
<feature type="domain" description="Helicase C-terminal" evidence="3">
    <location>
        <begin position="610"/>
        <end position="776"/>
    </location>
</feature>
<feature type="domain" description="RLR CTR" evidence="4">
    <location>
        <begin position="794"/>
        <end position="925"/>
    </location>
</feature>
<feature type="region of interest" description="Interaction with ZC3HAV1" evidence="37">
    <location>
        <begin position="218"/>
        <end position="925"/>
    </location>
</feature>
<feature type="region of interest" description="Mediates interaction with RNF135" evidence="48">
    <location>
        <begin position="735"/>
        <end position="925"/>
    </location>
</feature>
<feature type="short sequence motif" description="DECH box">
    <location>
        <begin position="372"/>
        <end position="375"/>
    </location>
</feature>
<feature type="binding site" evidence="79">
    <location>
        <begin position="264"/>
        <end position="271"/>
    </location>
    <ligand>
        <name>ATP</name>
        <dbReference type="ChEBI" id="CHEBI:30616"/>
    </ligand>
</feature>
<feature type="binding site" evidence="4">
    <location>
        <position position="810"/>
    </location>
    <ligand>
        <name>Zn(2+)</name>
        <dbReference type="ChEBI" id="CHEBI:29105"/>
    </ligand>
</feature>
<feature type="binding site" evidence="4">
    <location>
        <position position="813"/>
    </location>
    <ligand>
        <name>Zn(2+)</name>
        <dbReference type="ChEBI" id="CHEBI:29105"/>
    </ligand>
</feature>
<feature type="binding site" evidence="4">
    <location>
        <position position="864"/>
    </location>
    <ligand>
        <name>Zn(2+)</name>
        <dbReference type="ChEBI" id="CHEBI:29105"/>
    </ligand>
</feature>
<feature type="binding site" evidence="4">
    <location>
        <position position="869"/>
    </location>
    <ligand>
        <name>Zn(2+)</name>
        <dbReference type="ChEBI" id="CHEBI:29105"/>
    </ligand>
</feature>
<feature type="modified residue" description="(Microbial infection) Phosphoserine" evidence="71">
    <location>
        <position position="8"/>
    </location>
</feature>
<feature type="modified residue" description="Phosphoserine" evidence="46 67">
    <location>
        <position position="8"/>
    </location>
</feature>
<feature type="modified residue" description="Phosphothreonine" evidence="46">
    <location>
        <position position="170"/>
    </location>
</feature>
<feature type="modified residue" description="(Microbial infection) Deamidated asparagine; by herpes simplex virus 1/HHV-1 UL37" evidence="60">
    <location>
        <position position="495"/>
    </location>
</feature>
<feature type="modified residue" description="(Microbial infection) Deamidated asparagine; by herpes simplex virus 1/HHV-1 UL37" evidence="60">
    <location>
        <position position="549"/>
    </location>
</feature>
<feature type="modified residue" description="Phosphothreonine; by CK2" evidence="36">
    <location>
        <position position="770"/>
    </location>
</feature>
<feature type="modified residue" description="Phosphoserine; by CK2" evidence="36">
    <location>
        <position position="854"/>
    </location>
</feature>
<feature type="modified residue" description="Phosphoserine; by CK2" evidence="36">
    <location>
        <position position="855"/>
    </location>
</feature>
<feature type="modified residue" description="N6-acetyllysine" evidence="83">
    <location>
        <position position="858"/>
    </location>
</feature>
<feature type="modified residue" description="N6-acetyllysine" evidence="57">
    <location>
        <position position="909"/>
    </location>
</feature>
<feature type="cross-link" description="Glycyl lysine isopeptide (Lys-Gly) (interchain with G-Cter in ubiquitin)" evidence="81">
    <location>
        <position position="48"/>
    </location>
</feature>
<feature type="cross-link" description="Glycyl lysine isopeptide (Lys-Gly) (interchain with G-Cter in ubiquitin)" evidence="81">
    <location>
        <position position="96"/>
    </location>
</feature>
<feature type="cross-link" description="Glycyl lysine isopeptide (Lys-Gly) (interchain with G-Cter in ubiquitin)" evidence="28 52">
    <location>
        <position position="154"/>
    </location>
</feature>
<feature type="cross-link" description="Glycyl lysine isopeptide (Lys-Gly) (interchain with G-Cter in ubiquitin)" evidence="28 52">
    <location>
        <position position="164"/>
    </location>
</feature>
<feature type="cross-link" description="Glycyl lysine isopeptide (Lys-Gly) (interchain with G-Cter in ubiquitin)" evidence="28 52 61">
    <location>
        <position position="172"/>
    </location>
</feature>
<feature type="cross-link" description="Glycyl lysine isopeptide (Lys-Gly) (interchain with G-Cter in ubiquitin)" evidence="56">
    <location>
        <position position="181"/>
    </location>
</feature>
<feature type="cross-link" description="Glycyl lysine isopeptide (Lys-Gly) (interchain with G-Cter in ubiquitin)" evidence="67">
    <location>
        <position position="193"/>
    </location>
</feature>
<feature type="cross-link" description="Glycyl lysine isopeptide (Lys-Gly) (interchain with G-Cter in ubiquitin)" evidence="67">
    <location>
        <position position="203"/>
    </location>
</feature>
<feature type="cross-link" description="Glycyl lysine isopeptide (Lys-Gly) (interchain with G-Cter in ubiquitin)" evidence="1">
    <location>
        <position position="812"/>
    </location>
</feature>
<feature type="splice variant" id="VSP_016054" description="In isoform 2." evidence="76">
    <location>
        <begin position="36"/>
        <end position="80"/>
    </location>
</feature>
<feature type="sequence variant" id="VAR_023747" description="In dbSNP:rs10813831." evidence="18">
    <original>R</original>
    <variation>C</variation>
    <location>
        <position position="7"/>
    </location>
</feature>
<feature type="sequence variant" id="VAR_073667" description="In SGMRT2; results in constitutive activation and enhanced interferon-mediated signaling; dbSNP:rs786204848." evidence="55">
    <original>C</original>
    <variation>F</variation>
    <location>
        <position position="268"/>
    </location>
</feature>
<feature type="sequence variant" id="VAR_073668" description="In SGMRT2; results in constitutive activation and enhanced interferon-mediated signaling; dbSNP:rs786204847." evidence="55">
    <original>E</original>
    <variation>A</variation>
    <location>
        <position position="373"/>
    </location>
</feature>
<feature type="sequence variant" id="VAR_023748" description="In dbSNP:rs17217280." evidence="5 74">
    <original>D</original>
    <variation>E</variation>
    <location>
        <position position="580"/>
    </location>
</feature>
<feature type="mutagenesis site" description="Complete loss of MARCHF5-mediated degradation." evidence="67">
    <original>S</original>
    <variation>E</variation>
    <location>
        <position position="8"/>
    </location>
</feature>
<feature type="mutagenesis site" description="No IRF3 signaling activity. No effect on dsRNA binding." evidence="9">
    <original>T</original>
    <variation>I</variation>
    <location>
        <position position="55"/>
    </location>
</feature>
<feature type="mutagenesis site" description="Little or no effect on ubiquitination of the 2 CARD domain. Abolishes ubiquitination by RNF125." evidence="16 56">
    <original>K</original>
    <variation>R</variation>
    <location>
        <position position="99"/>
    </location>
</feature>
<feature type="mutagenesis site" description="Reduction of ubiquitination. Reduction of INFB induction." evidence="28">
    <original>K</original>
    <variation>R</variation>
    <location>
        <position position="154"/>
    </location>
</feature>
<feature type="mutagenesis site" description="Reduction of ubiquitination. Reduction of INFB induction." evidence="28">
    <original>K</original>
    <variation>R</variation>
    <location>
        <position position="164"/>
    </location>
</feature>
<feature type="mutagenesis site" description="Little or no effect on ubiquitination of the 2 CARD domains." evidence="16">
    <original>K</original>
    <variation>R</variation>
    <location>
        <position position="169"/>
    </location>
</feature>
<feature type="mutagenesis site" description="Complete loss of ubiquitination. No interaction with MAVS/IPS1. No induction of IFN-beta." evidence="16 28">
    <original>K</original>
    <variation>R</variation>
    <location>
        <position position="172"/>
    </location>
</feature>
<feature type="mutagenesis site" description="Little or no effect on ubiquitination of the 2 CARD domains." evidence="16">
    <original>K</original>
    <variation>R</variation>
    <location>
        <position position="181"/>
    </location>
</feature>
<feature type="mutagenesis site" description="Little or no effect on ubiquitination of the 2 CARD domains." evidence="16">
    <original>K</original>
    <variation>R</variation>
    <location>
        <position position="190"/>
    </location>
</feature>
<feature type="mutagenesis site" description="Little or no effect on ubiquitination of the 2 CARD domains." evidence="16">
    <original>K</original>
    <variation>R</variation>
    <location>
        <position position="193"/>
    </location>
</feature>
<feature type="mutagenesis site" description="No IRF3 signaling activity. Loss of dsRNA-induced ATPase activity. No effect on ds-RNA binding. Changed RIG-I signaling pathway." evidence="7 9 26">
    <original>K</original>
    <variation>A</variation>
    <location>
        <position position="270"/>
    </location>
</feature>
<feature type="mutagenesis site" description="Loss of dsRNA-induced ATPase activity. No effect on ds-RNA binding. Changed RIG-I signaling pathway." evidence="26">
    <original>DECH</original>
    <variation>AACA</variation>
    <location>
        <begin position="372"/>
        <end position="375"/>
    </location>
</feature>
<feature type="mutagenesis site" description="Loss of dsRNA-induced ATPase activity. No effect on ds-RNA binding. Changed RIG-I signaling pathway." evidence="26">
    <original>TAS</original>
    <variation>AAA</variation>
    <location>
        <begin position="409"/>
        <end position="411"/>
    </location>
</feature>
<feature type="mutagenesis site" description="Complete loss of herpes simplex virus 1 UL37-mediated deamidation; when associated with Q-549." evidence="60">
    <original>N</original>
    <variation>Q</variation>
    <location>
        <position position="495"/>
    </location>
</feature>
<feature type="mutagenesis site" description="Complete loss of herpes simplex virus 1 UL37-mediated deamidation; when associated with Q-495." evidence="60">
    <original>N</original>
    <variation>Q</variation>
    <location>
        <position position="549"/>
    </location>
</feature>
<feature type="mutagenesis site" description="Loss of dsRNA-induced ATPase activity. Changed RIG-I signaling pathway." evidence="26">
    <original>FVKT</original>
    <variation>AVKA</variation>
    <location>
        <begin position="633"/>
        <end position="636"/>
    </location>
</feature>
<feature type="mutagenesis site" description="No effect on dsRNA-induced ATPase activity. Changed RIG-I signaling pathway." evidence="26">
    <original>TSVAD</original>
    <variation>ASVAA</variation>
    <location>
        <begin position="697"/>
        <end position="701"/>
    </location>
</feature>
<feature type="mutagenesis site" description="Loss of dsRNA-induced ATPase activity. Changed RIG-I signaling pathway." evidence="26">
    <original>QTRGR</original>
    <variation>ATRGA</variation>
    <location>
        <begin position="726"/>
        <end position="730"/>
    </location>
</feature>
<feature type="mutagenesis site" description="Decreased polyubiquitination. Loss of function in RIG-I signaling pathway. Decreased ubiquitination and function in RIG-I signaling pathway without effect on RNA-binding; when associated with R-849, R-851, R-888, R-907 and R-909." evidence="48">
    <original>K</original>
    <variation>R</variation>
    <location>
        <position position="788"/>
    </location>
</feature>
<feature type="mutagenesis site" description="Decreased ubiquitination and function in RIG-I signaling pathway without effect on RNA-binding; when associated with R-788, R-851, R-888, R-907 and R-909." evidence="48">
    <original>K</original>
    <variation>R</variation>
    <location>
        <position position="849"/>
    </location>
</feature>
<feature type="mutagenesis site" description="Decreased ubiquitination and function in RIG-I signaling pathway without effect on RNA-binding; when associated with R-788, R-849, R-888, R-907 and R-909." evidence="48">
    <original>K</original>
    <variation>R</variation>
    <location>
        <position position="851"/>
    </location>
</feature>
<feature type="mutagenesis site" description="Decreased ubiquitination and function in RIG-I signaling pathway without effect on RNA-binding; when associated with R-788, R-849, R-851, R-907 and R-909." evidence="48">
    <original>K</original>
    <variation>R</variation>
    <location>
        <position position="888"/>
    </location>
</feature>
<feature type="mutagenesis site" description="Decreased ubiquitination and function in RIG-I signaling pathway without effect on RNA-binding; when associated with R-788, R-849, R-851, R-888 and R-909." evidence="48">
    <original>K</original>
    <variation>R</variation>
    <location>
        <position position="907"/>
    </location>
</feature>
<feature type="mutagenesis site" description="Acetylation-mimic mutant which abolishes the ability to inhibit viral replication." evidence="57">
    <original>K</original>
    <variation>Q</variation>
    <location>
        <position position="909"/>
    </location>
</feature>
<feature type="mutagenesis site" description="Acetylation-resistant mutant which inhibits viral replication similar to the wild-type. Decreased ubiquitination and function in RIG-I signaling pathway without effect on RNA-binding; when associated with R-788, R-849, R-851, R-888 and R-907." evidence="48 57">
    <original>K</original>
    <variation>R</variation>
    <location>
        <position position="909"/>
    </location>
</feature>
<feature type="helix" evidence="89">
    <location>
        <begin position="2"/>
        <end position="11"/>
    </location>
</feature>
<feature type="helix" evidence="89">
    <location>
        <begin position="13"/>
        <end position="19"/>
    </location>
</feature>
<feature type="helix" evidence="89">
    <location>
        <begin position="22"/>
        <end position="25"/>
    </location>
</feature>
<feature type="turn" evidence="89">
    <location>
        <begin position="26"/>
        <end position="32"/>
    </location>
</feature>
<feature type="helix" evidence="89">
    <location>
        <begin position="35"/>
        <end position="48"/>
    </location>
</feature>
<feature type="helix" evidence="89">
    <location>
        <begin position="50"/>
        <end position="63"/>
    </location>
</feature>
<feature type="helix" evidence="89">
    <location>
        <begin position="69"/>
        <end position="80"/>
    </location>
</feature>
<feature type="turn" evidence="89">
    <location>
        <begin position="83"/>
        <end position="85"/>
    </location>
</feature>
<feature type="helix" evidence="89">
    <location>
        <begin position="86"/>
        <end position="91"/>
    </location>
</feature>
<feature type="helix" evidence="89">
    <location>
        <begin position="95"/>
        <end position="99"/>
    </location>
</feature>
<feature type="helix" evidence="89">
    <location>
        <begin position="101"/>
        <end position="117"/>
    </location>
</feature>
<feature type="helix" evidence="89">
    <location>
        <begin position="120"/>
        <end position="127"/>
    </location>
</feature>
<feature type="helix" evidence="89">
    <location>
        <begin position="128"/>
        <end position="130"/>
    </location>
</feature>
<feature type="helix" evidence="89">
    <location>
        <begin position="133"/>
        <end position="146"/>
    </location>
</feature>
<feature type="helix" evidence="89">
    <location>
        <begin position="148"/>
        <end position="160"/>
    </location>
</feature>
<feature type="helix" evidence="89">
    <location>
        <begin position="167"/>
        <end position="177"/>
    </location>
</feature>
<feature type="turn" evidence="89">
    <location>
        <begin position="183"/>
        <end position="185"/>
    </location>
</feature>
<feature type="helix" evidence="85">
    <location>
        <begin position="245"/>
        <end position="255"/>
    </location>
</feature>
<feature type="strand" evidence="85">
    <location>
        <begin position="260"/>
        <end position="263"/>
    </location>
</feature>
<feature type="helix" evidence="85">
    <location>
        <begin position="270"/>
        <end position="284"/>
    </location>
</feature>
<feature type="strand" evidence="85">
    <location>
        <begin position="293"/>
        <end position="296"/>
    </location>
</feature>
<feature type="helix" evidence="85">
    <location>
        <begin position="300"/>
        <end position="313"/>
    </location>
</feature>
<feature type="turn" evidence="85">
    <location>
        <begin position="314"/>
        <end position="318"/>
    </location>
</feature>
<feature type="strand" evidence="85">
    <location>
        <begin position="321"/>
        <end position="324"/>
    </location>
</feature>
<feature type="strand" evidence="85">
    <location>
        <begin position="326"/>
        <end position="328"/>
    </location>
</feature>
<feature type="strand" evidence="85">
    <location>
        <begin position="330"/>
        <end position="332"/>
    </location>
</feature>
<feature type="helix" evidence="85">
    <location>
        <begin position="334"/>
        <end position="339"/>
    </location>
</feature>
<feature type="strand" evidence="85">
    <location>
        <begin position="342"/>
        <end position="346"/>
    </location>
</feature>
<feature type="helix" evidence="85">
    <location>
        <begin position="348"/>
        <end position="356"/>
    </location>
</feature>
<feature type="strand" evidence="90">
    <location>
        <begin position="358"/>
        <end position="360"/>
    </location>
</feature>
<feature type="helix" evidence="85">
    <location>
        <begin position="363"/>
        <end position="365"/>
    </location>
</feature>
<feature type="strand" evidence="85">
    <location>
        <begin position="367"/>
        <end position="372"/>
    </location>
</feature>
<feature type="helix" evidence="85">
    <location>
        <begin position="374"/>
        <end position="376"/>
    </location>
</feature>
<feature type="strand" evidence="91">
    <location>
        <begin position="378"/>
        <end position="381"/>
    </location>
</feature>
<feature type="helix" evidence="85">
    <location>
        <begin position="382"/>
        <end position="395"/>
    </location>
</feature>
<feature type="strand" evidence="88">
    <location>
        <begin position="396"/>
        <end position="398"/>
    </location>
</feature>
<feature type="strand" evidence="85">
    <location>
        <begin position="404"/>
        <end position="410"/>
    </location>
</feature>
<feature type="helix" evidence="85">
    <location>
        <begin position="420"/>
        <end position="433"/>
    </location>
</feature>
<feature type="strand" evidence="85">
    <location>
        <begin position="438"/>
        <end position="440"/>
    </location>
</feature>
<feature type="strand" evidence="96">
    <location>
        <begin position="443"/>
        <end position="445"/>
    </location>
</feature>
<feature type="helix" evidence="85">
    <location>
        <begin position="446"/>
        <end position="452"/>
    </location>
</feature>
<feature type="strand" evidence="85">
    <location>
        <begin position="457"/>
        <end position="462"/>
    </location>
</feature>
<feature type="helix" evidence="85">
    <location>
        <begin position="470"/>
        <end position="489"/>
    </location>
</feature>
<feature type="helix" evidence="85">
    <location>
        <begin position="493"/>
        <end position="495"/>
    </location>
</feature>
<feature type="strand" evidence="85">
    <location>
        <begin position="496"/>
        <end position="498"/>
    </location>
</feature>
<feature type="strand" evidence="85">
    <location>
        <begin position="504"/>
        <end position="506"/>
    </location>
</feature>
<feature type="helix" evidence="85">
    <location>
        <begin position="507"/>
        <end position="518"/>
    </location>
</feature>
<feature type="strand" evidence="90">
    <location>
        <begin position="526"/>
        <end position="528"/>
    </location>
</feature>
<feature type="helix" evidence="85">
    <location>
        <begin position="531"/>
        <end position="557"/>
    </location>
</feature>
<feature type="helix" evidence="85">
    <location>
        <begin position="560"/>
        <end position="575"/>
    </location>
</feature>
<feature type="helix" evidence="85">
    <location>
        <begin position="581"/>
        <end position="591"/>
    </location>
</feature>
<feature type="helix" evidence="85">
    <location>
        <begin position="594"/>
        <end position="602"/>
    </location>
</feature>
<feature type="helix" evidence="85">
    <location>
        <begin position="604"/>
        <end position="606"/>
    </location>
</feature>
<feature type="helix" evidence="85">
    <location>
        <begin position="609"/>
        <end position="622"/>
    </location>
</feature>
<feature type="strand" evidence="85">
    <location>
        <begin position="630"/>
        <end position="633"/>
    </location>
</feature>
<feature type="helix" evidence="85">
    <location>
        <begin position="637"/>
        <end position="649"/>
    </location>
</feature>
<feature type="helix" evidence="86">
    <location>
        <begin position="651"/>
        <end position="653"/>
    </location>
</feature>
<feature type="strand" evidence="86">
    <location>
        <begin position="658"/>
        <end position="660"/>
    </location>
</feature>
<feature type="strand" evidence="94">
    <location>
        <begin position="667"/>
        <end position="670"/>
    </location>
</feature>
<feature type="helix" evidence="90">
    <location>
        <begin position="675"/>
        <end position="683"/>
    </location>
</feature>
<feature type="strand" evidence="90">
    <location>
        <begin position="686"/>
        <end position="690"/>
    </location>
</feature>
<feature type="strand" evidence="85">
    <location>
        <begin position="694"/>
        <end position="700"/>
    </location>
</feature>
<feature type="strand" evidence="88">
    <location>
        <begin position="701"/>
        <end position="703"/>
    </location>
</feature>
<feature type="helix" evidence="86">
    <location>
        <begin position="706"/>
        <end position="708"/>
    </location>
</feature>
<feature type="strand" evidence="85">
    <location>
        <begin position="710"/>
        <end position="716"/>
    </location>
</feature>
<feature type="helix" evidence="90">
    <location>
        <begin position="721"/>
        <end position="726"/>
    </location>
</feature>
<feature type="helix" evidence="90">
    <location>
        <begin position="727"/>
        <end position="731"/>
    </location>
</feature>
<feature type="strand" evidence="95">
    <location>
        <begin position="733"/>
        <end position="735"/>
    </location>
</feature>
<feature type="strand" evidence="85">
    <location>
        <begin position="737"/>
        <end position="743"/>
    </location>
</feature>
<feature type="helix" evidence="85">
    <location>
        <begin position="745"/>
        <end position="768"/>
    </location>
</feature>
<feature type="helix" evidence="85">
    <location>
        <begin position="773"/>
        <end position="793"/>
    </location>
</feature>
<feature type="strand" evidence="84">
    <location>
        <begin position="801"/>
        <end position="804"/>
    </location>
</feature>
<feature type="strand" evidence="92">
    <location>
        <begin position="806"/>
        <end position="810"/>
    </location>
</feature>
<feature type="turn" evidence="92">
    <location>
        <begin position="811"/>
        <end position="813"/>
    </location>
</feature>
<feature type="strand" evidence="92">
    <location>
        <begin position="816"/>
        <end position="819"/>
    </location>
</feature>
<feature type="helix" evidence="92">
    <location>
        <begin position="820"/>
        <end position="822"/>
    </location>
</feature>
<feature type="strand" evidence="92">
    <location>
        <begin position="823"/>
        <end position="826"/>
    </location>
</feature>
<feature type="turn" evidence="92">
    <location>
        <begin position="827"/>
        <end position="829"/>
    </location>
</feature>
<feature type="strand" evidence="92">
    <location>
        <begin position="830"/>
        <end position="833"/>
    </location>
</feature>
<feature type="strand" evidence="90">
    <location>
        <begin position="835"/>
        <end position="837"/>
    </location>
</feature>
<feature type="helix" evidence="92">
    <location>
        <begin position="838"/>
        <end position="840"/>
    </location>
</feature>
<feature type="strand" evidence="92">
    <location>
        <begin position="842"/>
        <end position="846"/>
    </location>
</feature>
<feature type="strand" evidence="95">
    <location>
        <begin position="853"/>
        <end position="855"/>
    </location>
</feature>
<feature type="strand" evidence="92">
    <location>
        <begin position="856"/>
        <end position="865"/>
    </location>
</feature>
<feature type="turn" evidence="92">
    <location>
        <begin position="867"/>
        <end position="869"/>
    </location>
</feature>
<feature type="strand" evidence="92">
    <location>
        <begin position="872"/>
        <end position="879"/>
    </location>
</feature>
<feature type="strand" evidence="92">
    <location>
        <begin position="882"/>
        <end position="887"/>
    </location>
</feature>
<feature type="helix" evidence="92">
    <location>
        <begin position="889"/>
        <end position="891"/>
    </location>
</feature>
<feature type="strand" evidence="92">
    <location>
        <begin position="892"/>
        <end position="896"/>
    </location>
</feature>
<feature type="turn" evidence="92">
    <location>
        <begin position="897"/>
        <end position="899"/>
    </location>
</feature>
<feature type="strand" evidence="87">
    <location>
        <begin position="902"/>
        <end position="904"/>
    </location>
</feature>
<feature type="helix" evidence="92">
    <location>
        <begin position="908"/>
        <end position="910"/>
    </location>
</feature>
<feature type="helix" evidence="93">
    <location>
        <begin position="920"/>
        <end position="922"/>
    </location>
</feature>
<protein>
    <recommendedName>
        <fullName evidence="79">Antiviral innate immune response receptor RIG-I</fullName>
    </recommendedName>
    <alternativeName>
        <fullName evidence="80">ATP-dependent RNA helicase DDX58</fullName>
        <ecNumber evidence="26">3.6.4.13</ecNumber>
    </alternativeName>
    <alternativeName>
        <fullName>DEAD box protein 58</fullName>
    </alternativeName>
    <alternativeName>
        <fullName>RIG-I-like receptor 1</fullName>
        <shortName>RLR-1</shortName>
    </alternativeName>
    <alternativeName>
        <fullName evidence="82">RNA sensor RIG-I</fullName>
    </alternativeName>
    <alternativeName>
        <fullName>Retinoic acid-inducible gene 1 protein</fullName>
        <shortName>RIG-1</shortName>
    </alternativeName>
    <alternativeName>
        <fullName>Retinoic acid-inducible gene I protein</fullName>
        <shortName>RIG-I</shortName>
    </alternativeName>
</protein>
<sequence>MTTEQRRSLQAFQDYIRKTLDPTYILSYMAPWFREEEVQYIQAEKNNKGPMEAATLFLKFLLELQEEGWFRGFLDALDHAGYSGLYEAIESWDFKKIEKLEEYRLLLKRLQPEFKTRIIPTDIISDLSECLINQECEEILQICSTKGMMAGAEKLVECLLRSDKENWPKTLKLALEKERNKFSELWIVEKGIKDVETEDLEDKMETSDIQIFYQEDPECQNLSENSCPPSEVSDTNLYSPFKPRNYQLELALPAMKGKNTIICAPTGCGKTFVSLLICEHHLKKFPQGQKGKVVFFANQIPVYEQQKSVFSKYFERHGYRVTGISGATAENVPVEQIVENNDIIILTPQILVNNLKKGTIPSLSIFTLMIFDECHNTSKQHPYNMIMFNYLDQKLGGSSGPLPQVIGLTASVGVGDAKNTDEALDYICKLCASLDASVIATVKHNLEELEQVVYKPQKFFRKVESRISDKFKYIIAQLMRDTESLAKRICKDLENLSQIQNREFGTQKYEQWIVTVQKACMVFQMPDKDEESRICKALFLYTSHLRKYNDALIISEHARMKDALDYLKDFFSNVRAAGFDEIEQDLTQRFEEKLQELESVSRDPSNENPKLEDLCFILQEEYHLNPETITILFVKTRALVDALKNWIEGNPKLSFLKPGILTGRGKTNQNTGMTLPAQKCILDAFKASGDHNILIATSVADEGIDIAQCNLVILYEYVGNVIKMIQTRGRGRARGSKCFLLTSNAGVIEKEQINMYKEKMMNDSILRLQTWDEAVFREKILHIQTHEKFIRDSQEKPKPVPDKENKKLLCRKCKALACYTADVRVIEECHYTVLGDAFKECFVSRPHPKPKQFSSFEKRAKIFCARQNCSHDWGIHVKYKTFEIPVIKIESFVVEDIATGVQTLYSKWKDFHFEKIPFDPAEMSK</sequence>
<dbReference type="EC" id="3.6.4.13" evidence="26"/>
<dbReference type="EMBL" id="AF038963">
    <property type="protein sequence ID" value="AAD19826.1"/>
    <property type="molecule type" value="mRNA"/>
</dbReference>
<dbReference type="EMBL" id="AL161783">
    <property type="status" value="NOT_ANNOTATED_CDS"/>
    <property type="molecule type" value="Genomic_DNA"/>
</dbReference>
<dbReference type="EMBL" id="AL353671">
    <property type="status" value="NOT_ANNOTATED_CDS"/>
    <property type="molecule type" value="Genomic_DNA"/>
</dbReference>
<dbReference type="EMBL" id="CH471071">
    <property type="protein sequence ID" value="EAW58548.1"/>
    <property type="molecule type" value="Genomic_DNA"/>
</dbReference>
<dbReference type="EMBL" id="BC132786">
    <property type="protein sequence ID" value="AAI32787.1"/>
    <property type="molecule type" value="mRNA"/>
</dbReference>
<dbReference type="EMBL" id="BC136610">
    <property type="protein sequence ID" value="AAI36611.1"/>
    <property type="molecule type" value="mRNA"/>
</dbReference>
<dbReference type="EMBL" id="BX647917">
    <property type="protein sequence ID" value="CAI46068.1"/>
    <property type="molecule type" value="mRNA"/>
</dbReference>
<dbReference type="EMBL" id="AL137608">
    <property type="protein sequence ID" value="CAB70840.1"/>
    <property type="molecule type" value="mRNA"/>
</dbReference>
<dbReference type="CCDS" id="CCDS6526.1">
    <molecule id="O95786-1"/>
</dbReference>
<dbReference type="PIR" id="T46312">
    <property type="entry name" value="T46312"/>
</dbReference>
<dbReference type="RefSeq" id="NP_055129.2">
    <molecule id="O95786-1"/>
    <property type="nucleotide sequence ID" value="NM_014314.3"/>
</dbReference>
<dbReference type="PDB" id="2LWD">
    <property type="method" value="NMR"/>
    <property type="chains" value="A=95-190"/>
</dbReference>
<dbReference type="PDB" id="2LWE">
    <property type="method" value="NMR"/>
    <property type="chains" value="A=95-190"/>
</dbReference>
<dbReference type="PDB" id="2QFB">
    <property type="method" value="X-ray"/>
    <property type="resolution" value="3.00 A"/>
    <property type="chains" value="A/B/C/D/E/F/G/H/I/J=802-925"/>
</dbReference>
<dbReference type="PDB" id="2QFD">
    <property type="method" value="X-ray"/>
    <property type="resolution" value="2.70 A"/>
    <property type="chains" value="A/B/C/D/E/F/G/H/I/J=802-925"/>
</dbReference>
<dbReference type="PDB" id="2RMJ">
    <property type="method" value="NMR"/>
    <property type="chains" value="A=792-925"/>
</dbReference>
<dbReference type="PDB" id="2YKG">
    <property type="method" value="X-ray"/>
    <property type="resolution" value="2.50 A"/>
    <property type="chains" value="A=230-925"/>
</dbReference>
<dbReference type="PDB" id="3LRN">
    <property type="method" value="X-ray"/>
    <property type="resolution" value="2.60 A"/>
    <property type="chains" value="A/B=803-923"/>
</dbReference>
<dbReference type="PDB" id="3LRR">
    <property type="method" value="X-ray"/>
    <property type="resolution" value="2.15 A"/>
    <property type="chains" value="A/B=803-923"/>
</dbReference>
<dbReference type="PDB" id="3NCU">
    <property type="method" value="X-ray"/>
    <property type="resolution" value="2.55 A"/>
    <property type="chains" value="A/B=792-925"/>
</dbReference>
<dbReference type="PDB" id="3OG8">
    <property type="method" value="X-ray"/>
    <property type="resolution" value="2.40 A"/>
    <property type="chains" value="A/B=802-925"/>
</dbReference>
<dbReference type="PDB" id="3ZD6">
    <property type="method" value="X-ray"/>
    <property type="resolution" value="2.80 A"/>
    <property type="chains" value="A=230-925"/>
</dbReference>
<dbReference type="PDB" id="3ZD7">
    <property type="method" value="X-ray"/>
    <property type="resolution" value="2.50 A"/>
    <property type="chains" value="A=230-925"/>
</dbReference>
<dbReference type="PDB" id="4AY2">
    <property type="method" value="X-ray"/>
    <property type="resolution" value="2.80 A"/>
    <property type="chains" value="A=239-925"/>
</dbReference>
<dbReference type="PDB" id="4BPB">
    <property type="method" value="X-ray"/>
    <property type="resolution" value="2.58 A"/>
    <property type="chains" value="A=230-925"/>
</dbReference>
<dbReference type="PDB" id="4NQK">
    <property type="method" value="X-ray"/>
    <property type="resolution" value="3.70 A"/>
    <property type="chains" value="A/B/C/D=1-200"/>
</dbReference>
<dbReference type="PDB" id="4ON9">
    <property type="method" value="X-ray"/>
    <property type="resolution" value="2.71 A"/>
    <property type="chains" value="A/B=230-793"/>
</dbReference>
<dbReference type="PDB" id="4P4H">
    <property type="method" value="X-ray"/>
    <property type="resolution" value="3.40 A"/>
    <property type="chains" value="A/B/C/D/E/F/G/H=1-201"/>
</dbReference>
<dbReference type="PDB" id="5E3H">
    <property type="method" value="X-ray"/>
    <property type="resolution" value="2.70 A"/>
    <property type="chains" value="A=232-925"/>
</dbReference>
<dbReference type="PDB" id="5F98">
    <property type="method" value="X-ray"/>
    <property type="resolution" value="3.28 A"/>
    <property type="chains" value="A/C/E/G/I/K=232-925"/>
</dbReference>
<dbReference type="PDB" id="5F9F">
    <property type="method" value="X-ray"/>
    <property type="resolution" value="2.60 A"/>
    <property type="chains" value="A/C/E/G/I/K=232-925"/>
</dbReference>
<dbReference type="PDB" id="5F9H">
    <property type="method" value="X-ray"/>
    <property type="resolution" value="3.10 A"/>
    <property type="chains" value="A/C/E/G/I/K=232-925"/>
</dbReference>
<dbReference type="PDB" id="6GPG">
    <property type="method" value="X-ray"/>
    <property type="resolution" value="2.89 A"/>
    <property type="chains" value="A=232-925"/>
</dbReference>
<dbReference type="PDB" id="6KYV">
    <property type="method" value="X-ray"/>
    <property type="resolution" value="3.00 A"/>
    <property type="chains" value="B/D/F/H/J/L=242-922"/>
</dbReference>
<dbReference type="PDB" id="7BAH">
    <property type="method" value="X-ray"/>
    <property type="resolution" value="1.89 A"/>
    <property type="chains" value="A/B=802-925"/>
</dbReference>
<dbReference type="PDB" id="7BAI">
    <property type="method" value="X-ray"/>
    <property type="resolution" value="3.40 A"/>
    <property type="chains" value="A/B/E=802-925"/>
</dbReference>
<dbReference type="PDB" id="7JL1">
    <property type="method" value="EM"/>
    <property type="resolution" value="3.90 A"/>
    <property type="chains" value="A=204-925"/>
</dbReference>
<dbReference type="PDB" id="7JL3">
    <property type="method" value="EM"/>
    <property type="resolution" value="4.20 A"/>
    <property type="chains" value="A/C/E=204-925"/>
</dbReference>
<dbReference type="PDB" id="7MK1">
    <property type="method" value="X-ray"/>
    <property type="resolution" value="1.90 A"/>
    <property type="chains" value="A/B=801-925"/>
</dbReference>
<dbReference type="PDB" id="7TNX">
    <property type="method" value="EM"/>
    <property type="resolution" value="3.54 A"/>
    <property type="chains" value="A=1-925"/>
</dbReference>
<dbReference type="PDB" id="7TNY">
    <property type="method" value="EM"/>
    <property type="resolution" value="3.20 A"/>
    <property type="chains" value="A=1-925"/>
</dbReference>
<dbReference type="PDB" id="7TNZ">
    <property type="method" value="EM"/>
    <property type="resolution" value="3.54 A"/>
    <property type="chains" value="A=1-925"/>
</dbReference>
<dbReference type="PDB" id="7TO0">
    <property type="method" value="EM"/>
    <property type="resolution" value="3.50 A"/>
    <property type="chains" value="A=1-925"/>
</dbReference>
<dbReference type="PDB" id="7TO1">
    <property type="method" value="EM"/>
    <property type="resolution" value="3.66 A"/>
    <property type="chains" value="A=1-925"/>
</dbReference>
<dbReference type="PDB" id="7TO2">
    <property type="method" value="EM"/>
    <property type="resolution" value="3.20 A"/>
    <property type="chains" value="A=1-925"/>
</dbReference>
<dbReference type="PDB" id="8DVR">
    <property type="method" value="EM"/>
    <property type="resolution" value="3.30 A"/>
    <property type="chains" value="A=1-925"/>
</dbReference>
<dbReference type="PDB" id="8DVS">
    <property type="method" value="EM"/>
    <property type="resolution" value="3.00 A"/>
    <property type="chains" value="A=1-925"/>
</dbReference>
<dbReference type="PDB" id="8DVU">
    <property type="method" value="EM"/>
    <property type="resolution" value="2.90 A"/>
    <property type="chains" value="A=1-925"/>
</dbReference>
<dbReference type="PDB" id="8G7T">
    <property type="method" value="EM"/>
    <property type="resolution" value="3.20 A"/>
    <property type="chains" value="A/C=1-925"/>
</dbReference>
<dbReference type="PDB" id="8G7U">
    <property type="method" value="EM"/>
    <property type="resolution" value="4.00 A"/>
    <property type="chains" value="A/C=1-925"/>
</dbReference>
<dbReference type="PDB" id="8G7V">
    <property type="method" value="EM"/>
    <property type="resolution" value="3.90 A"/>
    <property type="chains" value="A/C=1-925"/>
</dbReference>
<dbReference type="PDB" id="8SCZ">
    <property type="method" value="EM"/>
    <property type="resolution" value="3.40 A"/>
    <property type="chains" value="A=1-925"/>
</dbReference>
<dbReference type="PDB" id="8SD0">
    <property type="method" value="EM"/>
    <property type="resolution" value="3.80 A"/>
    <property type="chains" value="A=1-925"/>
</dbReference>
<dbReference type="PDBsum" id="2LWD"/>
<dbReference type="PDBsum" id="2LWE"/>
<dbReference type="PDBsum" id="2QFB"/>
<dbReference type="PDBsum" id="2QFD"/>
<dbReference type="PDBsum" id="2RMJ"/>
<dbReference type="PDBsum" id="2YKG"/>
<dbReference type="PDBsum" id="3LRN"/>
<dbReference type="PDBsum" id="3LRR"/>
<dbReference type="PDBsum" id="3NCU"/>
<dbReference type="PDBsum" id="3OG8"/>
<dbReference type="PDBsum" id="3ZD6"/>
<dbReference type="PDBsum" id="3ZD7"/>
<dbReference type="PDBsum" id="4AY2"/>
<dbReference type="PDBsum" id="4BPB"/>
<dbReference type="PDBsum" id="4NQK"/>
<dbReference type="PDBsum" id="4ON9"/>
<dbReference type="PDBsum" id="4P4H"/>
<dbReference type="PDBsum" id="5E3H"/>
<dbReference type="PDBsum" id="5F98"/>
<dbReference type="PDBsum" id="5F9F"/>
<dbReference type="PDBsum" id="5F9H"/>
<dbReference type="PDBsum" id="6GPG"/>
<dbReference type="PDBsum" id="6KYV"/>
<dbReference type="PDBsum" id="7BAH"/>
<dbReference type="PDBsum" id="7BAI"/>
<dbReference type="PDBsum" id="7JL1"/>
<dbReference type="PDBsum" id="7JL3"/>
<dbReference type="PDBsum" id="7MK1"/>
<dbReference type="PDBsum" id="7TNX"/>
<dbReference type="PDBsum" id="7TNY"/>
<dbReference type="PDBsum" id="7TNZ"/>
<dbReference type="PDBsum" id="7TO0"/>
<dbReference type="PDBsum" id="7TO1"/>
<dbReference type="PDBsum" id="7TO2"/>
<dbReference type="PDBsum" id="8DVR"/>
<dbReference type="PDBsum" id="8DVS"/>
<dbReference type="PDBsum" id="8DVU"/>
<dbReference type="PDBsum" id="8G7T"/>
<dbReference type="PDBsum" id="8G7U"/>
<dbReference type="PDBsum" id="8G7V"/>
<dbReference type="PDBsum" id="8SCZ"/>
<dbReference type="PDBsum" id="8SD0"/>
<dbReference type="BMRB" id="O95786"/>
<dbReference type="EMDB" id="EMD-22369"/>
<dbReference type="EMDB" id="EMD-22371"/>
<dbReference type="EMDB" id="EMD-26022"/>
<dbReference type="EMDB" id="EMD-26023"/>
<dbReference type="EMDB" id="EMD-26024"/>
<dbReference type="EMDB" id="EMD-26025"/>
<dbReference type="EMDB" id="EMD-26026"/>
<dbReference type="EMDB" id="EMD-26027"/>
<dbReference type="EMDB" id="EMD-27743"/>
<dbReference type="EMDB" id="EMD-27744"/>
<dbReference type="EMDB" id="EMD-27745"/>
<dbReference type="EMDB" id="EMD-29823"/>
<dbReference type="EMDB" id="EMD-29824"/>
<dbReference type="EMDB" id="EMD-29825"/>
<dbReference type="EMDB" id="EMD-40347"/>
<dbReference type="EMDB" id="EMD-40348"/>
<dbReference type="SASBDB" id="O95786"/>
<dbReference type="SMR" id="O95786"/>
<dbReference type="BioGRID" id="117121">
    <property type="interactions" value="1774"/>
</dbReference>
<dbReference type="CORUM" id="O95786"/>
<dbReference type="DIP" id="DIP-35444N"/>
<dbReference type="FunCoup" id="O95786">
    <property type="interactions" value="287"/>
</dbReference>
<dbReference type="IntAct" id="O95786">
    <property type="interactions" value="39"/>
</dbReference>
<dbReference type="MINT" id="O95786"/>
<dbReference type="STRING" id="9606.ENSP00000369213"/>
<dbReference type="GlyCosmos" id="O95786">
    <property type="glycosylation" value="1 site, 2 glycans"/>
</dbReference>
<dbReference type="GlyGen" id="O95786">
    <property type="glycosylation" value="1 site, 2 O-linked glycans (1 site)"/>
</dbReference>
<dbReference type="iPTMnet" id="O95786"/>
<dbReference type="MetOSite" id="O95786"/>
<dbReference type="PhosphoSitePlus" id="O95786"/>
<dbReference type="BioMuta" id="DDX58"/>
<dbReference type="jPOST" id="O95786"/>
<dbReference type="MassIVE" id="O95786"/>
<dbReference type="PaxDb" id="9606-ENSP00000369213"/>
<dbReference type="PeptideAtlas" id="O95786"/>
<dbReference type="ProteomicsDB" id="51047">
    <molecule id="O95786-1"/>
</dbReference>
<dbReference type="ProteomicsDB" id="51048">
    <molecule id="O95786-2"/>
</dbReference>
<dbReference type="Pumba" id="O95786"/>
<dbReference type="Antibodypedia" id="3367">
    <property type="antibodies" value="676 antibodies from 46 providers"/>
</dbReference>
<dbReference type="DNASU" id="23586"/>
<dbReference type="Ensembl" id="ENST00000379868.6">
    <molecule id="O95786-2"/>
    <property type="protein sequence ID" value="ENSP00000369197.2"/>
    <property type="gene ID" value="ENSG00000107201.12"/>
</dbReference>
<dbReference type="Ensembl" id="ENST00000379883.3">
    <molecule id="O95786-1"/>
    <property type="protein sequence ID" value="ENSP00000369213.2"/>
    <property type="gene ID" value="ENSG00000107201.12"/>
</dbReference>
<dbReference type="GeneID" id="23586"/>
<dbReference type="KEGG" id="hsa:23586"/>
<dbReference type="MANE-Select" id="ENST00000379883.3">
    <property type="protein sequence ID" value="ENSP00000369213.2"/>
    <property type="RefSeq nucleotide sequence ID" value="NM_014314.4"/>
    <property type="RefSeq protein sequence ID" value="NP_055129.2"/>
</dbReference>
<dbReference type="UCSC" id="uc003zra.4">
    <molecule id="O95786-1"/>
    <property type="organism name" value="human"/>
</dbReference>
<dbReference type="AGR" id="HGNC:19102"/>
<dbReference type="CTD" id="23586"/>
<dbReference type="DisGeNET" id="23586"/>
<dbReference type="GeneCards" id="RIGI"/>
<dbReference type="HGNC" id="HGNC:19102">
    <property type="gene designation" value="RIGI"/>
</dbReference>
<dbReference type="HPA" id="ENSG00000107201">
    <property type="expression patterns" value="Low tissue specificity"/>
</dbReference>
<dbReference type="MalaCards" id="RIGI"/>
<dbReference type="MIM" id="609631">
    <property type="type" value="gene"/>
</dbReference>
<dbReference type="MIM" id="616298">
    <property type="type" value="phenotype"/>
</dbReference>
<dbReference type="neXtProt" id="NX_O95786"/>
<dbReference type="OpenTargets" id="ENSG00000107201"/>
<dbReference type="Orphanet" id="85191">
    <property type="disease" value="Singleton-Merten dysplasia"/>
</dbReference>
<dbReference type="PharmGKB" id="PA134994272"/>
<dbReference type="VEuPathDB" id="HostDB:ENSG00000107201"/>
<dbReference type="eggNOG" id="KOG0354">
    <property type="taxonomic scope" value="Eukaryota"/>
</dbReference>
<dbReference type="GeneTree" id="ENSGT00940000153173"/>
<dbReference type="HOGENOM" id="CLU_006888_1_0_1"/>
<dbReference type="InParanoid" id="O95786"/>
<dbReference type="OMA" id="FFANHVP"/>
<dbReference type="OrthoDB" id="4187at9604"/>
<dbReference type="PAN-GO" id="O95786">
    <property type="GO annotations" value="7 GO annotations based on evolutionary models"/>
</dbReference>
<dbReference type="PhylomeDB" id="O95786"/>
<dbReference type="TreeFam" id="TF330258"/>
<dbReference type="BRENDA" id="3.6.4.13">
    <property type="organism ID" value="2681"/>
</dbReference>
<dbReference type="PathwayCommons" id="O95786"/>
<dbReference type="Reactome" id="R-HSA-1169408">
    <property type="pathway name" value="ISG15 antiviral mechanism"/>
</dbReference>
<dbReference type="Reactome" id="R-HSA-168928">
    <property type="pathway name" value="DDX58/IFIH1-mediated induction of interferon-alpha/beta"/>
</dbReference>
<dbReference type="Reactome" id="R-HSA-5689880">
    <property type="pathway name" value="Ub-specific processing proteases"/>
</dbReference>
<dbReference type="Reactome" id="R-HSA-5689896">
    <property type="pathway name" value="Ovarian tumor domain proteases"/>
</dbReference>
<dbReference type="Reactome" id="R-HSA-8983711">
    <property type="pathway name" value="OAS antiviral response"/>
</dbReference>
<dbReference type="Reactome" id="R-HSA-918233">
    <property type="pathway name" value="TRAF3-dependent IRF activation pathway"/>
</dbReference>
<dbReference type="Reactome" id="R-HSA-933541">
    <property type="pathway name" value="TRAF6 mediated IRF7 activation"/>
</dbReference>
<dbReference type="Reactome" id="R-HSA-933542">
    <property type="pathway name" value="TRAF6 mediated NF-kB activation"/>
</dbReference>
<dbReference type="Reactome" id="R-HSA-933543">
    <property type="pathway name" value="NF-kB activation through FADD/RIP-1 pathway mediated by caspase-8 and -10"/>
</dbReference>
<dbReference type="Reactome" id="R-HSA-936440">
    <property type="pathway name" value="Negative regulators of DDX58/IFIH1 signaling"/>
</dbReference>
<dbReference type="Reactome" id="R-HSA-9692916">
    <property type="pathway name" value="SARS-CoV-1 activates/modulates innate immune responses"/>
</dbReference>
<dbReference type="Reactome" id="R-HSA-9705671">
    <property type="pathway name" value="SARS-CoV-2 activates/modulates innate and adaptive immune responses"/>
</dbReference>
<dbReference type="Reactome" id="R-HSA-9833109">
    <property type="pathway name" value="Evasion by RSV of host interferon responses"/>
</dbReference>
<dbReference type="Reactome" id="R-HSA-9833110">
    <property type="pathway name" value="RSV-host interactions"/>
</dbReference>
<dbReference type="Reactome" id="R-HSA-9909505">
    <property type="pathway name" value="Modulation of host responses by IFN-stimulated genes"/>
</dbReference>
<dbReference type="SignaLink" id="O95786"/>
<dbReference type="SIGNOR" id="O95786"/>
<dbReference type="BioGRID-ORCS" id="23586">
    <property type="hits" value="13 hits in 1151 CRISPR screens"/>
</dbReference>
<dbReference type="CD-CODE" id="DEE660B4">
    <property type="entry name" value="Stress granule"/>
</dbReference>
<dbReference type="ChiTaRS" id="DDX58">
    <property type="organism name" value="human"/>
</dbReference>
<dbReference type="EvolutionaryTrace" id="O95786"/>
<dbReference type="GeneWiki" id="RIG-I"/>
<dbReference type="GenomeRNAi" id="23586"/>
<dbReference type="Pharos" id="O95786">
    <property type="development level" value="Tbio"/>
</dbReference>
<dbReference type="PRO" id="PR:O95786"/>
<dbReference type="Proteomes" id="UP000005640">
    <property type="component" value="Chromosome 9"/>
</dbReference>
<dbReference type="RNAct" id="O95786">
    <property type="molecule type" value="protein"/>
</dbReference>
<dbReference type="Bgee" id="ENSG00000107201">
    <property type="expression patterns" value="Expressed in buccal mucosa cell and 199 other cell types or tissues"/>
</dbReference>
<dbReference type="ExpressionAtlas" id="O95786">
    <property type="expression patterns" value="baseline and differential"/>
</dbReference>
<dbReference type="GO" id="GO:0015629">
    <property type="term" value="C:actin cytoskeleton"/>
    <property type="evidence" value="ECO:0000314"/>
    <property type="project" value="UniProtKB"/>
</dbReference>
<dbReference type="GO" id="GO:0005923">
    <property type="term" value="C:bicellular tight junction"/>
    <property type="evidence" value="ECO:0000314"/>
    <property type="project" value="UniProtKB"/>
</dbReference>
<dbReference type="GO" id="GO:0005737">
    <property type="term" value="C:cytoplasm"/>
    <property type="evidence" value="ECO:0000314"/>
    <property type="project" value="UniProtKB"/>
</dbReference>
<dbReference type="GO" id="GO:0005829">
    <property type="term" value="C:cytosol"/>
    <property type="evidence" value="ECO:0000304"/>
    <property type="project" value="Reactome"/>
</dbReference>
<dbReference type="GO" id="GO:1990904">
    <property type="term" value="C:ribonucleoprotein complex"/>
    <property type="evidence" value="ECO:0000314"/>
    <property type="project" value="UniProtKB"/>
</dbReference>
<dbReference type="GO" id="GO:0032587">
    <property type="term" value="C:ruffle membrane"/>
    <property type="evidence" value="ECO:0000314"/>
    <property type="project" value="UniProtKB"/>
</dbReference>
<dbReference type="GO" id="GO:0005524">
    <property type="term" value="F:ATP binding"/>
    <property type="evidence" value="ECO:0007669"/>
    <property type="project" value="UniProtKB-KW"/>
</dbReference>
<dbReference type="GO" id="GO:0016887">
    <property type="term" value="F:ATP hydrolysis activity"/>
    <property type="evidence" value="ECO:0000315"/>
    <property type="project" value="UniProtKB"/>
</dbReference>
<dbReference type="GO" id="GO:0003690">
    <property type="term" value="F:double-stranded DNA binding"/>
    <property type="evidence" value="ECO:0007669"/>
    <property type="project" value="Ensembl"/>
</dbReference>
<dbReference type="GO" id="GO:0003725">
    <property type="term" value="F:double-stranded RNA binding"/>
    <property type="evidence" value="ECO:0000314"/>
    <property type="project" value="UniProtKB"/>
</dbReference>
<dbReference type="GO" id="GO:0005525">
    <property type="term" value="F:GTP binding"/>
    <property type="evidence" value="ECO:0000315"/>
    <property type="project" value="UniProtKB"/>
</dbReference>
<dbReference type="GO" id="GO:0042802">
    <property type="term" value="F:identical protein binding"/>
    <property type="evidence" value="ECO:0000353"/>
    <property type="project" value="IntAct"/>
</dbReference>
<dbReference type="GO" id="GO:0038187">
    <property type="term" value="F:pattern recognition receptor activity"/>
    <property type="evidence" value="ECO:0000314"/>
    <property type="project" value="UniProt"/>
</dbReference>
<dbReference type="GO" id="GO:0003724">
    <property type="term" value="F:RNA helicase activity"/>
    <property type="evidence" value="ECO:0000315"/>
    <property type="project" value="UniProtKB"/>
</dbReference>
<dbReference type="GO" id="GO:0003727">
    <property type="term" value="F:single-stranded RNA binding"/>
    <property type="evidence" value="ECO:0000315"/>
    <property type="project" value="UniProtKB"/>
</dbReference>
<dbReference type="GO" id="GO:0031625">
    <property type="term" value="F:ubiquitin protein ligase binding"/>
    <property type="evidence" value="ECO:0000353"/>
    <property type="project" value="UniProtKB"/>
</dbReference>
<dbReference type="GO" id="GO:0008270">
    <property type="term" value="F:zinc ion binding"/>
    <property type="evidence" value="ECO:0000314"/>
    <property type="project" value="UniProtKB"/>
</dbReference>
<dbReference type="GO" id="GO:0140374">
    <property type="term" value="P:antiviral innate immune response"/>
    <property type="evidence" value="ECO:0000314"/>
    <property type="project" value="UniProt"/>
</dbReference>
<dbReference type="GO" id="GO:0071360">
    <property type="term" value="P:cellular response to exogenous dsRNA"/>
    <property type="evidence" value="ECO:0000315"/>
    <property type="project" value="UniProtKB"/>
</dbReference>
<dbReference type="GO" id="GO:0002753">
    <property type="term" value="P:cytoplasmic pattern recognition receptor signaling pathway"/>
    <property type="evidence" value="ECO:0000314"/>
    <property type="project" value="UniProt"/>
</dbReference>
<dbReference type="GO" id="GO:0051607">
    <property type="term" value="P:defense response to virus"/>
    <property type="evidence" value="ECO:0000314"/>
    <property type="project" value="UniProtKB"/>
</dbReference>
<dbReference type="GO" id="GO:0009597">
    <property type="term" value="P:detection of virus"/>
    <property type="evidence" value="ECO:0000314"/>
    <property type="project" value="BHF-UCL"/>
</dbReference>
<dbReference type="GO" id="GO:0010467">
    <property type="term" value="P:gene expression"/>
    <property type="evidence" value="ECO:0007669"/>
    <property type="project" value="Ensembl"/>
</dbReference>
<dbReference type="GO" id="GO:0045087">
    <property type="term" value="P:innate immune response"/>
    <property type="evidence" value="ECO:0000315"/>
    <property type="project" value="UniProtKB"/>
</dbReference>
<dbReference type="GO" id="GO:0002230">
    <property type="term" value="P:positive regulation of defense response to virus by host"/>
    <property type="evidence" value="ECO:0000315"/>
    <property type="project" value="UniProtKB"/>
</dbReference>
<dbReference type="GO" id="GO:0010628">
    <property type="term" value="P:positive regulation of gene expression"/>
    <property type="evidence" value="ECO:0000314"/>
    <property type="project" value="CACAO"/>
</dbReference>
<dbReference type="GO" id="GO:0032725">
    <property type="term" value="P:positive regulation of granulocyte macrophage colony-stimulating factor production"/>
    <property type="evidence" value="ECO:0000314"/>
    <property type="project" value="CACAO"/>
</dbReference>
<dbReference type="GO" id="GO:0032727">
    <property type="term" value="P:positive regulation of interferon-alpha production"/>
    <property type="evidence" value="ECO:0000314"/>
    <property type="project" value="UniProtKB"/>
</dbReference>
<dbReference type="GO" id="GO:0032728">
    <property type="term" value="P:positive regulation of interferon-beta production"/>
    <property type="evidence" value="ECO:0000314"/>
    <property type="project" value="BHF-UCL"/>
</dbReference>
<dbReference type="GO" id="GO:0032755">
    <property type="term" value="P:positive regulation of interleukin-6 production"/>
    <property type="evidence" value="ECO:0000314"/>
    <property type="project" value="CACAO"/>
</dbReference>
<dbReference type="GO" id="GO:0032757">
    <property type="term" value="P:positive regulation of interleukin-8 production"/>
    <property type="evidence" value="ECO:0000314"/>
    <property type="project" value="CACAO"/>
</dbReference>
<dbReference type="GO" id="GO:0002735">
    <property type="term" value="P:positive regulation of myeloid dendritic cell cytokine production"/>
    <property type="evidence" value="ECO:0000250"/>
    <property type="project" value="UniProtKB"/>
</dbReference>
<dbReference type="GO" id="GO:0060760">
    <property type="term" value="P:positive regulation of response to cytokine stimulus"/>
    <property type="evidence" value="ECO:0000315"/>
    <property type="project" value="UniProtKB"/>
</dbReference>
<dbReference type="GO" id="GO:0045944">
    <property type="term" value="P:positive regulation of transcription by RNA polymerase II"/>
    <property type="evidence" value="ECO:0000314"/>
    <property type="project" value="BHF-UCL"/>
</dbReference>
<dbReference type="GO" id="GO:0032760">
    <property type="term" value="P:positive regulation of tumor necrosis factor production"/>
    <property type="evidence" value="ECO:0000315"/>
    <property type="project" value="UniProtKB"/>
</dbReference>
<dbReference type="GO" id="GO:0030334">
    <property type="term" value="P:regulation of cell migration"/>
    <property type="evidence" value="ECO:0000314"/>
    <property type="project" value="UniProtKB"/>
</dbReference>
<dbReference type="GO" id="GO:0034344">
    <property type="term" value="P:regulation of type III interferon production"/>
    <property type="evidence" value="ECO:0000304"/>
    <property type="project" value="UniProtKB"/>
</dbReference>
<dbReference type="GO" id="GO:0043330">
    <property type="term" value="P:response to exogenous dsRNA"/>
    <property type="evidence" value="ECO:0000250"/>
    <property type="project" value="UniProtKB"/>
</dbReference>
<dbReference type="GO" id="GO:0009615">
    <property type="term" value="P:response to virus"/>
    <property type="evidence" value="ECO:0000304"/>
    <property type="project" value="UniProtKB"/>
</dbReference>
<dbReference type="GO" id="GO:0039529">
    <property type="term" value="P:RIG-I signaling pathway"/>
    <property type="evidence" value="ECO:0000314"/>
    <property type="project" value="UniProtKB"/>
</dbReference>
<dbReference type="CDD" id="cd08817">
    <property type="entry name" value="CARD_RIG-I_r2"/>
    <property type="match status" value="1"/>
</dbReference>
<dbReference type="CDD" id="cd18073">
    <property type="entry name" value="DEXHc_RIG-I_DDX58"/>
    <property type="match status" value="1"/>
</dbReference>
<dbReference type="CDD" id="cd12090">
    <property type="entry name" value="MDA5_ID"/>
    <property type="match status" value="1"/>
</dbReference>
<dbReference type="CDD" id="cd15805">
    <property type="entry name" value="RIG-I_C"/>
    <property type="match status" value="1"/>
</dbReference>
<dbReference type="CDD" id="cd18802">
    <property type="entry name" value="SF2_C_dicer"/>
    <property type="match status" value="1"/>
</dbReference>
<dbReference type="FunFam" id="1.10.533.10:FF:000072">
    <property type="entry name" value="Probable ATP-dependent RNA helicase DDX58"/>
    <property type="match status" value="1"/>
</dbReference>
<dbReference type="FunFam" id="1.10.533.10:FF:000078">
    <property type="entry name" value="Probable ATP-dependent RNA helicase DDX58"/>
    <property type="match status" value="1"/>
</dbReference>
<dbReference type="FunFam" id="1.20.1320.30:FF:000002">
    <property type="entry name" value="Probable ATP-dependent RNA helicase DDX58"/>
    <property type="match status" value="1"/>
</dbReference>
<dbReference type="FunFam" id="2.170.150.30:FF:000001">
    <property type="entry name" value="Probable ATP-dependent RNA helicase DDX58"/>
    <property type="match status" value="1"/>
</dbReference>
<dbReference type="FunFam" id="3.40.50.300:FF:001233">
    <property type="entry name" value="Probable ATP-dependent RNA helicase DDX58"/>
    <property type="match status" value="1"/>
</dbReference>
<dbReference type="FunFam" id="3.40.50.300:FF:001291">
    <property type="entry name" value="Probable ATP-dependent RNA helicase DDX58"/>
    <property type="match status" value="1"/>
</dbReference>
<dbReference type="Gene3D" id="1.20.1320.30">
    <property type="match status" value="1"/>
</dbReference>
<dbReference type="Gene3D" id="1.10.533.10">
    <property type="entry name" value="Death Domain, Fas"/>
    <property type="match status" value="2"/>
</dbReference>
<dbReference type="Gene3D" id="3.40.50.300">
    <property type="entry name" value="P-loop containing nucleotide triphosphate hydrolases"/>
    <property type="match status" value="2"/>
</dbReference>
<dbReference type="Gene3D" id="2.170.150.30">
    <property type="entry name" value="RIG-I-like receptor, C-terminal regulatory domain"/>
    <property type="match status" value="1"/>
</dbReference>
<dbReference type="InterPro" id="IPR031964">
    <property type="entry name" value="CARD_dom"/>
</dbReference>
<dbReference type="InterPro" id="IPR042145">
    <property type="entry name" value="CARD_RIG-I_r2"/>
</dbReference>
<dbReference type="InterPro" id="IPR011545">
    <property type="entry name" value="DEAD/DEAH_box_helicase_dom"/>
</dbReference>
<dbReference type="InterPro" id="IPR011029">
    <property type="entry name" value="DEATH-like_dom_sf"/>
</dbReference>
<dbReference type="InterPro" id="IPR014001">
    <property type="entry name" value="Helicase_ATP-bd"/>
</dbReference>
<dbReference type="InterPro" id="IPR001650">
    <property type="entry name" value="Helicase_C-like"/>
</dbReference>
<dbReference type="InterPro" id="IPR027417">
    <property type="entry name" value="P-loop_NTPase"/>
</dbReference>
<dbReference type="InterPro" id="IPR041204">
    <property type="entry name" value="RIG-I-like_C"/>
</dbReference>
<dbReference type="InterPro" id="IPR038557">
    <property type="entry name" value="RLR_C_sf"/>
</dbReference>
<dbReference type="InterPro" id="IPR021673">
    <property type="entry name" value="RLR_CTR"/>
</dbReference>
<dbReference type="InterPro" id="IPR051363">
    <property type="entry name" value="RLR_Helicase"/>
</dbReference>
<dbReference type="PANTHER" id="PTHR14074:SF16">
    <property type="entry name" value="ANTIVIRAL INNATE IMMUNE RESPONSE RECEPTOR RIG-I"/>
    <property type="match status" value="1"/>
</dbReference>
<dbReference type="PANTHER" id="PTHR14074">
    <property type="entry name" value="HELICASE WITH DEATH DOMAIN-RELATED"/>
    <property type="match status" value="1"/>
</dbReference>
<dbReference type="Pfam" id="PF16739">
    <property type="entry name" value="CARD_2"/>
    <property type="match status" value="2"/>
</dbReference>
<dbReference type="Pfam" id="PF00270">
    <property type="entry name" value="DEAD"/>
    <property type="match status" value="1"/>
</dbReference>
<dbReference type="Pfam" id="PF00271">
    <property type="entry name" value="Helicase_C"/>
    <property type="match status" value="1"/>
</dbReference>
<dbReference type="Pfam" id="PF18119">
    <property type="entry name" value="RIG-I_C"/>
    <property type="match status" value="1"/>
</dbReference>
<dbReference type="Pfam" id="PF11648">
    <property type="entry name" value="RIG-I_C-RD"/>
    <property type="match status" value="1"/>
</dbReference>
<dbReference type="SMART" id="SM00487">
    <property type="entry name" value="DEXDc"/>
    <property type="match status" value="1"/>
</dbReference>
<dbReference type="SMART" id="SM00490">
    <property type="entry name" value="HELICc"/>
    <property type="match status" value="1"/>
</dbReference>
<dbReference type="SUPFAM" id="SSF52540">
    <property type="entry name" value="P-loop containing nucleoside triphosphate hydrolases"/>
    <property type="match status" value="2"/>
</dbReference>
<dbReference type="PROSITE" id="PS51192">
    <property type="entry name" value="HELICASE_ATP_BIND_1"/>
    <property type="match status" value="1"/>
</dbReference>
<dbReference type="PROSITE" id="PS51194">
    <property type="entry name" value="HELICASE_CTER"/>
    <property type="match status" value="1"/>
</dbReference>
<dbReference type="PROSITE" id="PS51789">
    <property type="entry name" value="RLR_CTR"/>
    <property type="match status" value="1"/>
</dbReference>
<proteinExistence type="evidence at protein level"/>
<name>RIGI_HUMAN</name>